<feature type="signal peptide" evidence="1">
    <location>
        <begin position="1"/>
        <end position="18"/>
    </location>
</feature>
<feature type="propeptide" id="PRO_0000028107">
    <location>
        <begin position="19"/>
        <end position="42"/>
    </location>
</feature>
<feature type="chain" id="PRO_0000028108" description="Vitamin K-dependent protein C">
    <location>
        <begin position="43"/>
        <end position="461"/>
    </location>
</feature>
<feature type="chain" id="PRO_0000028109" description="Vitamin K-dependent protein C light chain">
    <location>
        <begin position="43"/>
        <end position="197"/>
    </location>
</feature>
<feature type="chain" id="PRO_0000028110" description="Vitamin K-dependent protein C heavy chain">
    <location>
        <begin position="200"/>
        <end position="461"/>
    </location>
</feature>
<feature type="peptide" id="PRO_0000028111" description="Activation peptide">
    <location>
        <begin position="200"/>
        <end position="211"/>
    </location>
</feature>
<feature type="domain" description="Gla" evidence="4">
    <location>
        <begin position="43"/>
        <end position="88"/>
    </location>
</feature>
<feature type="domain" description="EGF-like 1" evidence="2">
    <location>
        <begin position="97"/>
        <end position="132"/>
    </location>
</feature>
<feature type="domain" description="EGF-like 2" evidence="2">
    <location>
        <begin position="136"/>
        <end position="176"/>
    </location>
</feature>
<feature type="domain" description="Peptidase S1" evidence="3">
    <location>
        <begin position="212"/>
        <end position="450"/>
    </location>
</feature>
<feature type="active site" description="Charge relay system">
    <location>
        <position position="253"/>
    </location>
</feature>
<feature type="active site" description="Charge relay system">
    <location>
        <position position="299"/>
    </location>
</feature>
<feature type="active site" description="Charge relay system">
    <location>
        <position position="402"/>
    </location>
</feature>
<feature type="site" description="Cleavage; by thrombin">
    <location>
        <begin position="211"/>
        <end position="212"/>
    </location>
</feature>
<feature type="modified residue" description="4-carboxyglutamate" evidence="4 24">
    <location>
        <position position="48"/>
    </location>
</feature>
<feature type="modified residue" description="4-carboxyglutamate" evidence="4 24">
    <location>
        <position position="49"/>
    </location>
</feature>
<feature type="modified residue" description="4-carboxyglutamate" evidence="4 24">
    <location>
        <position position="56"/>
    </location>
</feature>
<feature type="modified residue" description="4-carboxyglutamate" evidence="4 24">
    <location>
        <position position="58"/>
    </location>
</feature>
<feature type="modified residue" description="4-carboxyglutamate" evidence="4 24">
    <location>
        <position position="61"/>
    </location>
</feature>
<feature type="modified residue" description="4-carboxyglutamate" evidence="4 24">
    <location>
        <position position="62"/>
    </location>
</feature>
<feature type="modified residue" description="4-carboxyglutamate" evidence="4 24">
    <location>
        <position position="67"/>
    </location>
</feature>
<feature type="modified residue" description="4-carboxyglutamate" evidence="4 24">
    <location>
        <position position="68"/>
    </location>
</feature>
<feature type="modified residue" description="4-carboxyglutamate" evidence="4 24">
    <location>
        <position position="71"/>
    </location>
</feature>
<feature type="modified residue" description="(3R)-3-hydroxyaspartate" evidence="24">
    <location>
        <position position="113"/>
    </location>
</feature>
<feature type="modified residue" description="Phosphoserine; by FAM20C" evidence="23">
    <location>
        <position position="347"/>
    </location>
</feature>
<feature type="glycosylation site" description="O-linked (GalNAc...) threonine" evidence="15">
    <location>
        <position position="19"/>
    </location>
</feature>
<feature type="glycosylation site" description="N-linked (GlcNAc...) asparagine">
    <location>
        <position position="139"/>
    </location>
</feature>
<feature type="glycosylation site" description="N-linked (GlcNAc...) asparagine" evidence="12 24">
    <location>
        <position position="290"/>
    </location>
</feature>
<feature type="glycosylation site" description="N-linked (GlcNAc...) asparagine" evidence="24">
    <location>
        <position position="355"/>
    </location>
</feature>
<feature type="glycosylation site" description="N-linked (GlcNAc...) asparagine; atypical; partial" evidence="13 24">
    <location>
        <position position="371"/>
    </location>
</feature>
<feature type="disulfide bond">
    <location>
        <begin position="59"/>
        <end position="64"/>
    </location>
</feature>
<feature type="disulfide bond">
    <location>
        <begin position="92"/>
        <end position="111"/>
    </location>
</feature>
<feature type="disulfide bond">
    <location>
        <begin position="101"/>
        <end position="106"/>
    </location>
</feature>
<feature type="disulfide bond">
    <location>
        <begin position="105"/>
        <end position="120"/>
    </location>
</feature>
<feature type="disulfide bond">
    <location>
        <begin position="122"/>
        <end position="131"/>
    </location>
</feature>
<feature type="disulfide bond">
    <location>
        <begin position="140"/>
        <end position="151"/>
    </location>
</feature>
<feature type="disulfide bond">
    <location>
        <begin position="147"/>
        <end position="160"/>
    </location>
</feature>
<feature type="disulfide bond">
    <location>
        <begin position="162"/>
        <end position="175"/>
    </location>
</feature>
<feature type="disulfide bond" description="Interchain (between light and heavy chains)">
    <location>
        <begin position="183"/>
        <end position="319"/>
    </location>
</feature>
<feature type="disulfide bond">
    <location>
        <begin position="238"/>
        <end position="254"/>
    </location>
</feature>
<feature type="disulfide bond">
    <location>
        <begin position="373"/>
        <end position="387"/>
    </location>
</feature>
<feature type="disulfide bond">
    <location>
        <begin position="398"/>
        <end position="426"/>
    </location>
</feature>
<feature type="splice variant" id="VSP_054393" description="In isoform 2." evidence="43">
    <original>M</original>
    <variation>MAAGRRTCSISTTRPCASASRM</variation>
    <location>
        <position position="1"/>
    </location>
</feature>
<feature type="splice variant" id="VSP_054394" description="In isoform 2." evidence="43">
    <original>R</original>
    <variation>RGEGERWMLAGGGAGLGPGWGRGTSTSCPRPPLPA</variation>
    <location>
        <position position="133"/>
    </location>
</feature>
<feature type="sequence variant" id="VAR_006634" description="In patients with PROC deficiency." evidence="38">
    <original>W</original>
    <variation>G</variation>
    <location>
        <position position="14"/>
    </location>
</feature>
<feature type="sequence variant" id="VAR_006635" description="In THPH3." evidence="41">
    <original>R</original>
    <variation>C</variation>
    <location>
        <position position="32"/>
    </location>
</feature>
<feature type="sequence variant" id="VAR_006636" description="In patients with PROC deficiency; dbSNP:rs769900251." evidence="35">
    <original>R</original>
    <variation>W</variation>
    <location>
        <position position="38"/>
    </location>
</feature>
<feature type="sequence variant" id="VAR_006638" description="In patients with PROC deficiency; dbSNP:rs774572099." evidence="35">
    <original>R</original>
    <variation>C</variation>
    <location>
        <position position="42"/>
    </location>
</feature>
<feature type="sequence variant" id="VAR_006637" description="In Malakoff; low anticoagulant activity; dbSNP:rs369504169." evidence="35">
    <original>R</original>
    <variation>H</variation>
    <location>
        <position position="42"/>
    </location>
</feature>
<feature type="sequence variant" id="VAR_055074" description="In THPH3; type II; Osaka-10; alters proteolytic processing so that S-42 is the N-terminus of the mature protein; dbSNP:rs774572099." evidence="40">
    <original>R</original>
    <variation>S</variation>
    <location>
        <position position="42"/>
    </location>
</feature>
<feature type="sequence variant" id="VAR_006639" description="In dbSNP:rs767626189." evidence="27">
    <original>A</original>
    <variation>T</variation>
    <location>
        <position position="43"/>
    </location>
</feature>
<feature type="sequence variant" id="VAR_006640" description="In patients with PROC deficiency." evidence="33">
    <original>E</original>
    <variation>D</variation>
    <location>
        <position position="49"/>
    </location>
</feature>
<feature type="sequence variant" id="VAR_006641" description="In patients with PROC deficiency; dbSNP:rs764546127.">
    <original>R</original>
    <variation>C</variation>
    <location>
        <position position="51"/>
    </location>
</feature>
<feature type="sequence variant" id="VAR_006643" description="In Yonago; defective anticoagulant activity." evidence="37">
    <original>R</original>
    <variation>G</variation>
    <location>
        <position position="57"/>
    </location>
</feature>
<feature type="sequence variant" id="VAR_006644" description="In patients with PROC deficiency; dbSNP:rs574949343.">
    <original>R</original>
    <variation>Q</variation>
    <location>
        <position position="57"/>
    </location>
</feature>
<feature type="sequence variant" id="VAR_006642" description="In THPH3; dbSNP:rs757583846." evidence="27 39">
    <original>R</original>
    <variation>W</variation>
    <location>
        <position position="57"/>
    </location>
</feature>
<feature type="sequence variant" id="VAR_006645" description="In THPH3; Vermont-1; dbSNP:rs121918148." evidence="6">
    <original>E</original>
    <variation>A</variation>
    <location>
        <position position="62"/>
    </location>
</feature>
<feature type="sequence variant" id="VAR_074296" description="In patients with PROC deficiency; dbSNP:rs199469481." evidence="17">
    <original>K</original>
    <variation>E</variation>
    <location>
        <position position="70"/>
    </location>
</feature>
<feature type="sequence variant" id="VAR_006646" description="In THPH3; Vermont-1; dbSNP:rs121918149." evidence="6">
    <original>V</original>
    <variation>M</variation>
    <location>
        <position position="76"/>
    </location>
</feature>
<feature type="sequence variant" id="VAR_073145" description="In THPH4; no effect on secretion; no effect on catalytic activity in vitro; dbSNP:rs1688085227." evidence="19">
    <original>D</original>
    <variation>G</variation>
    <location>
        <position position="77"/>
    </location>
</feature>
<feature type="sequence variant" id="VAR_006647" description="In patients with PROC deficiency." evidence="26">
    <original>G</original>
    <variation>C</variation>
    <location>
        <position position="89"/>
    </location>
</feature>
<feature type="sequence variant" id="VAR_074297" description="In patients with PROC deficiency; dbSNP:rs199469479." evidence="17">
    <original>C</original>
    <variation>G</variation>
    <location>
        <position position="106"/>
    </location>
</feature>
<feature type="sequence variant" id="VAR_006648" description="In patients with PROC deficiency; La Jolla-1; dbSNP:rs200234655.">
    <original>H</original>
    <variation>N</variation>
    <location>
        <position position="108"/>
    </location>
</feature>
<feature type="sequence variant" id="VAR_006649" description="In patients with PROC deficiency.">
    <original>G</original>
    <variation>R</variation>
    <location>
        <position position="109"/>
    </location>
</feature>
<feature type="sequence variant" id="VAR_006650" description="In patients with PROC deficiency.">
    <location>
        <begin position="114"/>
        <end position="118"/>
    </location>
</feature>
<feature type="sequence variant" id="VAR_006651" description="In THPH3; dbSNP:rs374476971." evidence="27">
    <original>G</original>
    <variation>R</variation>
    <location>
        <position position="114"/>
    </location>
</feature>
<feature type="sequence variant" id="VAR_074298" description="In patients with PROC deficiency; requires 2 nucleotide substitutions." evidence="17">
    <original>F</original>
    <variation>A</variation>
    <location>
        <position position="118"/>
    </location>
</feature>
<feature type="sequence variant" id="VAR_006652" description="In patients with PROC deficiency; dbSNP:rs1553424043.">
    <original>F</original>
    <variation>L</variation>
    <location>
        <position position="118"/>
    </location>
</feature>
<feature type="sequence variant" id="VAR_006653" description="In patients with PROC deficiency; St Louis-2.">
    <location>
        <begin position="119"/>
        <end position="124"/>
    </location>
</feature>
<feature type="sequence variant" id="VAR_006654" description="In patients with PROC deficiency; St Louis-3.">
    <location>
        <begin position="120"/>
        <end position="125"/>
    </location>
</feature>
<feature type="sequence variant" id="VAR_006655" description="In THPH4; neonatal purpura fulminans." evidence="28">
    <original>NG</original>
    <variation>K</variation>
    <location>
        <begin position="144"/>
        <end position="145"/>
    </location>
</feature>
<feature type="sequence variant" id="VAR_006656" description="In THPH3; dbSNP:rs370813536." evidence="34">
    <original>G</original>
    <variation>R</variation>
    <location>
        <position position="145"/>
    </location>
</feature>
<feature type="sequence variant" id="VAR_006657" description="In patients with PROC deficiency; dbSNP:rs1247269491.">
    <original>C</original>
    <variation>Y</variation>
    <location>
        <position position="147"/>
    </location>
</feature>
<feature type="sequence variant" id="VAR_006658" description="In patients with PROC deficiency; dbSNP:rs121918159.">
    <original>H</original>
    <variation>P</variation>
    <location>
        <position position="149"/>
    </location>
</feature>
<feature type="sequence variant" id="VAR_006659" description="In patients with PROC deficiency; dbSNP:rs1433503391.">
    <original>S</original>
    <variation>R</variation>
    <location>
        <position position="161"/>
    </location>
</feature>
<feature type="sequence variant" id="VAR_073146" description="In THPH4; drastically reduced secretion; colocalizes with 26S proteasome." evidence="19">
    <original>A</original>
    <variation>E</variation>
    <location>
        <position position="163"/>
    </location>
</feature>
<feature type="sequence variant" id="VAR_073147" description="In THPH3; drastically reduced secretion; colocalizes with 26S proteasome." evidence="19">
    <original>A</original>
    <variation>V</variation>
    <location>
        <position position="163"/>
    </location>
</feature>
<feature type="sequence variant" id="VAR_074299" description="In patients with PROC deficiency; dbSNP:rs199469474." evidence="17">
    <original>C</original>
    <variation>Y</variation>
    <location>
        <position position="175"/>
    </location>
</feature>
<feature type="sequence variant" id="VAR_006660" description="In THPH4; Clamart; dbSNP:rs1254257945." evidence="31">
    <original>A</original>
    <variation>P</variation>
    <location>
        <position position="178"/>
    </location>
</feature>
<feature type="sequence variant" id="VAR_074300" description="In patients with PROC deficiency; dbSNP:rs199469470." evidence="17">
    <original>F</original>
    <variation>V</variation>
    <location>
        <position position="181"/>
    </location>
</feature>
<feature type="sequence variant" id="VAR_006661" description="In patients with PROC deficiency; dbSNP:rs748920874.">
    <original>C</original>
    <variation>R</variation>
    <location>
        <position position="183"/>
    </location>
</feature>
<feature type="sequence variant" id="VAR_006662" description="In patients with PROC deficiency; La Jolla-3; dbSNP:rs146922325." evidence="17">
    <original>R</original>
    <variation>W</variation>
    <location>
        <position position="189"/>
    </location>
</feature>
<feature type="sequence variant" id="VAR_006663" description="In patients with PROC deficiency; dbSNP:rs371071104.">
    <original>R</original>
    <variation>C</variation>
    <location>
        <position position="194"/>
    </location>
</feature>
<feature type="sequence variant" id="VAR_006664" description="In THPH3; dbSNP:rs121918145." evidence="34">
    <original>P</original>
    <variation>L</variation>
    <location>
        <position position="210"/>
    </location>
</feature>
<feature type="sequence variant" id="VAR_006666" description="In patients with PROC deficiency; dbSNP:rs199469476." evidence="17 38">
    <original>R</original>
    <variation>Q</variation>
    <location>
        <position position="211"/>
    </location>
</feature>
<feature type="sequence variant" id="VAR_006665" description="In THPH3; London-1/Tochigi; dbSNP:rs121918143." evidence="22 34">
    <original>R</original>
    <variation>W</variation>
    <location>
        <position position="211"/>
    </location>
</feature>
<feature type="sequence variant" id="VAR_006667" description="In patients with PROC deficiency; dbSNP:rs121918153." evidence="26">
    <original>R</original>
    <variation>P</variation>
    <location>
        <position position="220"/>
    </location>
</feature>
<feature type="sequence variant" id="VAR_006669" description="In THPH3; Vermont-3; dbSNP:rs121918153." evidence="5 8 42">
    <original>R</original>
    <variation>Q</variation>
    <location>
        <position position="220"/>
    </location>
</feature>
<feature type="sequence variant" id="VAR_006668" description="In THPH3; dbSNP:rs121918152." evidence="8 17">
    <original>R</original>
    <variation>W</variation>
    <location>
        <position position="220"/>
    </location>
</feature>
<feature type="sequence variant" id="VAR_074301" description="In patients with PROC deficiency; dbSNP:rs199469483." evidence="17">
    <original>S</original>
    <variation>R</variation>
    <location>
        <position position="223"/>
    </location>
</feature>
<feature type="sequence variant" id="VAR_006670" description="In patients with PROC deficiency; dbSNP:rs121918155.">
    <original>Q</original>
    <variation>H</variation>
    <location>
        <position position="226"/>
    </location>
</feature>
<feature type="sequence variant" id="VAR_074302" description="In patients with PROC deficiency." evidence="17">
    <original>A</original>
    <variation>G</variation>
    <location>
        <position position="240"/>
    </location>
</feature>
<feature type="sequence variant" id="VAR_006671" description="In THPH3; dbSNP:rs774584131." evidence="34">
    <original>I</original>
    <variation>T</variation>
    <location>
        <position position="243"/>
    </location>
</feature>
<feature type="sequence variant" id="VAR_006672" description="In patients with PROC deficiency; dbSNP:rs759557871." evidence="38">
    <original>H</original>
    <variation>Y</variation>
    <location>
        <position position="244"/>
    </location>
</feature>
<feature type="sequence variant" id="VAR_006673" description="In patients with PROC deficiency; dbSNP:rs1458669732." evidence="38">
    <original>H</original>
    <variation>Q</variation>
    <location>
        <position position="253"/>
    </location>
</feature>
<feature type="sequence variant" id="VAR_006674" description="In patients with PROC deficiency; dbSNP:rs121918156.">
    <original>L</original>
    <variation>F</variation>
    <location>
        <position position="265"/>
    </location>
</feature>
<feature type="sequence variant" id="VAR_006675" description="In Marseille; low anticoagulant activity; dbSNP:rs752290840." evidence="35">
    <original>R</original>
    <variation>Q</variation>
    <location>
        <position position="271"/>
    </location>
</feature>
<feature type="sequence variant" id="VAR_006676" description="In patients with PROC deficiency; dbSNP:rs767112991.">
    <original>R</original>
    <variation>W</variation>
    <location>
        <position position="271"/>
    </location>
</feature>
<feature type="sequence variant" id="VAR_006677" description="In THPH3; dbSNP:rs121918154." evidence="14">
    <original>R</original>
    <variation>C</variation>
    <location>
        <position position="272"/>
    </location>
</feature>
<feature type="sequence variant" id="VAR_006678" description="In patients with PROC deficiency.">
    <original>D</original>
    <variation>DLD</variation>
    <location>
        <position position="281"/>
    </location>
</feature>
<feature type="sequence variant" id="VAR_006679" description="In THPH4; dbSNP:rs121918151." evidence="7">
    <original>P</original>
    <variation>L</variation>
    <location>
        <position position="289"/>
    </location>
</feature>
<feature type="sequence variant" id="VAR_006680" description="In Paris; low anticoagulant activity; dbSNP:rs200721675." evidence="35">
    <original>S</original>
    <variation>N</variation>
    <location>
        <position position="294"/>
    </location>
</feature>
<feature type="sequence variant" id="VAR_074303" description="In THPH3; also found in patients with PROC deficiency; decrease in vitamin-K dependent serine protease activity; decreased Golgi localization; dbSNP:rs199469471." evidence="17 21">
    <original>D</original>
    <variation>H</variation>
    <location>
        <position position="297"/>
    </location>
</feature>
<feature type="sequence variant" id="VAR_006681" description="In patients with PROC deficiency.">
    <original>N</original>
    <variation>D</variation>
    <location>
        <position position="298"/>
    </location>
</feature>
<feature type="sequence variant" id="VAR_006682" description="In patients with PROC deficiency; dbSNP:rs1343264503." evidence="26">
    <original>A</original>
    <variation>T</variation>
    <location>
        <position position="301"/>
    </location>
</feature>
<feature type="sequence variant" id="VAR_006683" description="In patients with PROC deficiency; dbSNP:rs121918144.">
    <original>A</original>
    <variation>V</variation>
    <location>
        <position position="301"/>
    </location>
</feature>
<feature type="sequence variant" id="VAR_006684" description="In patients with PROC deficiency; dbSNP:rs121918146.">
    <original>A</original>
    <variation>T</variation>
    <location>
        <position position="309"/>
    </location>
</feature>
<feature type="sequence variant" id="VAR_006685" description="In patients with PROC deficiency; dbSNP:rs121918160." evidence="17">
    <original>S</original>
    <variation>L</variation>
    <location>
        <position position="312"/>
    </location>
</feature>
<feature type="sequence variant" id="VAR_006686" description="In a patient with PROC deficiency; sporadic case." evidence="32">
    <original>S</original>
    <variation>P</variation>
    <location>
        <position position="312"/>
    </location>
</feature>
<feature type="sequence variant" id="VAR_074304" description="In patients with PROC deficiency; abolishes Golgi localization." evidence="16">
    <original>P</original>
    <variation>S</variation>
    <location>
        <position position="317"/>
    </location>
</feature>
<feature type="sequence variant" id="VAR_006687" description="In THPH3; dbSNP:rs1321566264." evidence="34 38">
    <original>P</original>
    <variation>L</variation>
    <location>
        <position position="321"/>
    </location>
</feature>
<feature type="sequence variant" id="VAR_006688" description="In THPH3." evidence="27">
    <original>G</original>
    <variation>R</variation>
    <location>
        <position position="324"/>
    </location>
</feature>
<feature type="sequence variant" id="VAR_074305" description="In patients with PROC deficiency; dbSNP:rs199469480." evidence="17">
    <original>E</original>
    <variation>V</variation>
    <location>
        <position position="327"/>
    </location>
</feature>
<feature type="sequence variant" id="VAR_006689" description="In THPH3; dbSNP:rs201907715." evidence="27 38">
    <original>R</original>
    <variation>C</variation>
    <location>
        <position position="328"/>
    </location>
</feature>
<feature type="sequence variant" id="VAR_006690" description="In THPH4; Muenchen; dbSNP:rs1688677671." evidence="31">
    <original>R</original>
    <variation>H</variation>
    <location>
        <position position="328"/>
    </location>
</feature>
<feature type="sequence variant" id="VAR_006691" description="In THPH4; dbSNP:rs121918150." evidence="10">
    <original>G</original>
    <variation>S</variation>
    <location>
        <position position="334"/>
    </location>
</feature>
<feature type="sequence variant" id="VAR_006692" description="In THPH3; Vermont-2; dbSNP:rs766261022." evidence="34 42">
    <original>T</original>
    <variation>M</variation>
    <location>
        <position position="340"/>
    </location>
</feature>
<feature type="sequence variant" id="VAR_006693" description="In patients with PROC deficiency.">
    <original>G</original>
    <variation>D</variation>
    <location>
        <position position="343"/>
    </location>
</feature>
<feature type="sequence variant" id="VAR_074306" description="Gain of function mutation; abolishes glycosylation at N-313; decreases its catalytic activity; significant loss of its protective effect on endothelial barrier function; increased activation by thrombin." evidence="20">
    <original>T</original>
    <variation>A</variation>
    <location>
        <position position="357"/>
    </location>
</feature>
<feature type="sequence variant" id="VAR_006694" description="In patients with PROC deficiency.">
    <location>
        <position position="363"/>
    </location>
</feature>
<feature type="sequence variant" id="VAR_006695" description="In THPH4; neonatal purpura fulminans; dbSNP:rs767730328." evidence="29">
    <original>V</original>
    <variation>A</variation>
    <location>
        <position position="367"/>
    </location>
</feature>
<feature type="sequence variant" id="VAR_006696" description="In THPH3; Osaka-6; dbSNP:rs1211098698." evidence="27 30">
    <original>P</original>
    <variation>L</variation>
    <location>
        <position position="369"/>
    </location>
</feature>
<feature type="sequence variant" id="VAR_006697" description="In patients with PROC deficiency; dbSNP:rs1688692415." evidence="38">
    <original>M</original>
    <variation>I</variation>
    <location>
        <position position="385"/>
    </location>
</feature>
<feature type="sequence variant" id="VAR_006698" description="In patients with PROC deficiency." evidence="38">
    <original>A</original>
    <variation>T</variation>
    <location>
        <position position="388"/>
    </location>
</feature>
<feature type="sequence variant" id="VAR_006699" description="In patients with PROC deficiency; dbSNP:rs769277939." evidence="38">
    <original>A</original>
    <variation>V</variation>
    <location>
        <position position="388"/>
    </location>
</feature>
<feature type="sequence variant" id="VAR_006700" description="In THPH3; Osaka-9; dbSNP:rs756467027." evidence="30">
    <original>G</original>
    <variation>R</variation>
    <location>
        <position position="392"/>
    </location>
</feature>
<feature type="sequence variant" id="VAR_006701" description="In patients with PROC deficiency; dbSNP:rs759316085.">
    <original>R</original>
    <variation>W</variation>
    <location>
        <position position="394"/>
    </location>
</feature>
<feature type="sequence variant" id="VAR_006702" description="In THPH3; La Jolla-2/Osaka-7 and -8; dbSNP:rs142742242." evidence="30">
    <original>D</original>
    <variation>N</variation>
    <location>
        <position position="401"/>
    </location>
</feature>
<feature type="sequence variant" id="VAR_006703" description="In THPH4; Hong Kong-2." evidence="11">
    <original>G</original>
    <variation>D</variation>
    <location>
        <position position="418"/>
    </location>
</feature>
<feature type="sequence variant" id="VAR_074307" description="In THPH3; also found in patients with PROC deficiency; decrease in vitamin-K dependent serine protease activity; dbSNP:rs199469472." evidence="17 21">
    <original>V</original>
    <variation>L</variation>
    <location>
        <position position="420"/>
    </location>
</feature>
<feature type="sequence variant" id="VAR_006704" description="In THPH3; dbSNP:rs1688706297." evidence="36">
    <original>G</original>
    <variation>S</variation>
    <location>
        <position position="423"/>
    </location>
</feature>
<feature type="sequence variant" id="VAR_006705" description="In THPH3; dbSNP:rs1688706883." evidence="34">
    <original>C</original>
    <variation>Y</variation>
    <location>
        <position position="426"/>
    </location>
</feature>
<feature type="sequence variant" id="VAR_006706" description="In patients with PROC deficiency; Purmerend; dbSNP:rs1266965698.">
    <original>G</original>
    <variation>S</variation>
    <location>
        <position position="433"/>
    </location>
</feature>
<feature type="sequence variant" id="VAR_006707" description="In THPH3." evidence="41">
    <original>T</original>
    <variation>N</variation>
    <location>
        <position position="436"/>
    </location>
</feature>
<feature type="sequence variant" id="VAR_006708" description="In THPH3; Osaka-4; dbSNP:rs753436021." evidence="30">
    <original>Y</original>
    <variation>H</variation>
    <location>
        <position position="441"/>
    </location>
</feature>
<feature type="sequence variant" id="VAR_006709" description="In THPH3; dbSNP:rs121918142." evidence="18">
    <original>W</original>
    <variation>C</variation>
    <location>
        <position position="444"/>
    </location>
</feature>
<feature type="sequence variant" id="VAR_006710" description="In patients with PROC deficiency; dbSNP:rs121918157.">
    <original>I</original>
    <variation>M</variation>
    <location>
        <position position="445"/>
    </location>
</feature>
<feature type="sequence conflict" description="In Ref. 11; AAA60164." evidence="44" ref="11">
    <original>C</original>
    <variation>Q</variation>
    <location>
        <position position="106"/>
    </location>
</feature>
<feature type="sequence conflict" description="In Ref. 3; AAA60165." evidence="44" ref="3">
    <original>I</original>
    <variation>IL</variation>
    <location>
        <position position="445"/>
    </location>
</feature>
<feature type="helix" evidence="46">
    <location>
        <begin position="48"/>
        <end position="50"/>
    </location>
</feature>
<feature type="helix" evidence="46">
    <location>
        <begin position="55"/>
        <end position="59"/>
    </location>
</feature>
<feature type="helix" evidence="46">
    <location>
        <begin position="66"/>
        <end position="73"/>
    </location>
</feature>
<feature type="strand" evidence="47">
    <location>
        <begin position="101"/>
        <end position="103"/>
    </location>
</feature>
<feature type="turn" evidence="47">
    <location>
        <begin position="104"/>
        <end position="107"/>
    </location>
</feature>
<feature type="strand" evidence="47">
    <location>
        <begin position="108"/>
        <end position="111"/>
    </location>
</feature>
<feature type="strand" evidence="47">
    <location>
        <begin position="120"/>
        <end position="122"/>
    </location>
</feature>
<feature type="strand" evidence="47">
    <location>
        <begin position="126"/>
        <end position="128"/>
    </location>
</feature>
<feature type="strand" evidence="47">
    <location>
        <begin position="138"/>
        <end position="142"/>
    </location>
</feature>
<feature type="helix" evidence="47">
    <location>
        <begin position="143"/>
        <end position="146"/>
    </location>
</feature>
<feature type="strand" evidence="47">
    <location>
        <begin position="148"/>
        <end position="153"/>
    </location>
</feature>
<feature type="strand" evidence="47">
    <location>
        <begin position="158"/>
        <end position="161"/>
    </location>
</feature>
<feature type="strand" evidence="47">
    <location>
        <begin position="166"/>
        <end position="168"/>
    </location>
</feature>
<feature type="strand" evidence="47">
    <location>
        <begin position="175"/>
        <end position="177"/>
    </location>
</feature>
<feature type="strand" evidence="47">
    <location>
        <begin position="179"/>
        <end position="181"/>
    </location>
</feature>
<feature type="strand" evidence="47">
    <location>
        <begin position="226"/>
        <end position="230"/>
    </location>
</feature>
<feature type="strand" evidence="47">
    <location>
        <begin position="236"/>
        <end position="244"/>
    </location>
</feature>
<feature type="strand" evidence="47">
    <location>
        <begin position="247"/>
        <end position="250"/>
    </location>
</feature>
<feature type="helix" evidence="47">
    <location>
        <begin position="252"/>
        <end position="255"/>
    </location>
</feature>
<feature type="strand" evidence="47">
    <location>
        <begin position="262"/>
        <end position="266"/>
    </location>
</feature>
<feature type="strand" evidence="47">
    <location>
        <begin position="269"/>
        <end position="272"/>
    </location>
</feature>
<feature type="strand" evidence="47">
    <location>
        <begin position="278"/>
        <end position="287"/>
    </location>
</feature>
<feature type="turn" evidence="47">
    <location>
        <begin position="293"/>
        <end position="295"/>
    </location>
</feature>
<feature type="strand" evidence="47">
    <location>
        <begin position="301"/>
        <end position="307"/>
    </location>
</feature>
<feature type="helix" evidence="47">
    <location>
        <begin position="323"/>
        <end position="328"/>
    </location>
</feature>
<feature type="turn" evidence="47">
    <location>
        <begin position="329"/>
        <end position="331"/>
    </location>
</feature>
<feature type="strand" evidence="47">
    <location>
        <begin position="336"/>
        <end position="341"/>
    </location>
</feature>
<feature type="strand" evidence="45">
    <location>
        <begin position="357"/>
        <end position="359"/>
    </location>
</feature>
<feature type="strand" evidence="47">
    <location>
        <begin position="361"/>
        <end position="368"/>
    </location>
</feature>
<feature type="helix" evidence="47">
    <location>
        <begin position="370"/>
        <end position="376"/>
    </location>
</feature>
<feature type="strand" evidence="47">
    <location>
        <begin position="385"/>
        <end position="388"/>
    </location>
</feature>
<feature type="turn" evidence="47">
    <location>
        <begin position="399"/>
        <end position="403"/>
    </location>
</feature>
<feature type="strand" evidence="47">
    <location>
        <begin position="405"/>
        <end position="410"/>
    </location>
</feature>
<feature type="strand" evidence="47">
    <location>
        <begin position="413"/>
        <end position="422"/>
    </location>
</feature>
<feature type="strand" evidence="47">
    <location>
        <begin position="424"/>
        <end position="427"/>
    </location>
</feature>
<feature type="strand" evidence="47">
    <location>
        <begin position="433"/>
        <end position="437"/>
    </location>
</feature>
<feature type="helix" evidence="47">
    <location>
        <begin position="438"/>
        <end position="441"/>
    </location>
</feature>
<feature type="helix" evidence="47">
    <location>
        <begin position="442"/>
        <end position="449"/>
    </location>
</feature>
<name>PROC_HUMAN</name>
<reference key="1">
    <citation type="journal article" date="1985" name="Nucleic Acids Res.">
        <title>The structure and evolution of a 461 amino acid human protein C precursor and its messenger RNA, based upon the DNA sequence of cloned human liver cDNAs.</title>
        <authorList>
            <person name="Beckmann R.J."/>
            <person name="Schmidt R.J."/>
            <person name="Santerre R.F."/>
            <person name="Plutzky J."/>
            <person name="Crabtree G.R."/>
            <person name="Long G.L."/>
        </authorList>
    </citation>
    <scope>NUCLEOTIDE SEQUENCE [MRNA] (ISOFORM 1)</scope>
</reference>
<reference key="2">
    <citation type="journal article" date="1985" name="Proc. Natl. Acad. Sci. U.S.A.">
        <title>The nucleotide sequence of the gene for human protein C.</title>
        <authorList>
            <person name="Foster D.C."/>
            <person name="Yoshitake S."/>
            <person name="Davie E.W."/>
        </authorList>
    </citation>
    <scope>NUCLEOTIDE SEQUENCE [GENOMIC DNA]</scope>
    <scope>HYDROXYLATION AT ASP-113</scope>
    <scope>GLYCOSYLATION AT ASN-290; ASN-355 AND ASN-371</scope>
    <scope>GAMMA-CARBOXYGLUTAMATION AT GLU-48; GLU-49; GLU-56; GLU-58; GLU-61; GLU-62; GLU-67; GLU-68 AND GLU-71</scope>
</reference>
<reference key="3">
    <citation type="journal article" date="1986" name="Proc. Natl. Acad. Sci. U.S.A.">
        <title>Evolution and organization of the human protein C gene.</title>
        <authorList>
            <person name="Plutzky J."/>
            <person name="Hoskins J.A."/>
            <person name="Long G.L."/>
            <person name="Crabtree G.R."/>
        </authorList>
    </citation>
    <scope>NUCLEOTIDE SEQUENCE [GENOMIC DNA]</scope>
</reference>
<reference key="4">
    <citation type="submission" date="2001-06" db="EMBL/GenBank/DDBJ databases">
        <authorList>
            <consortium name="SeattleSNPs variation discovery resource"/>
        </authorList>
    </citation>
    <scope>NUCLEOTIDE SEQUENCE [GENOMIC DNA]</scope>
</reference>
<reference key="5">
    <citation type="journal article" date="2004" name="Nat. Genet.">
        <title>Complete sequencing and characterization of 21,243 full-length human cDNAs.</title>
        <authorList>
            <person name="Ota T."/>
            <person name="Suzuki Y."/>
            <person name="Nishikawa T."/>
            <person name="Otsuki T."/>
            <person name="Sugiyama T."/>
            <person name="Irie R."/>
            <person name="Wakamatsu A."/>
            <person name="Hayashi K."/>
            <person name="Sato H."/>
            <person name="Nagai K."/>
            <person name="Kimura K."/>
            <person name="Makita H."/>
            <person name="Sekine M."/>
            <person name="Obayashi M."/>
            <person name="Nishi T."/>
            <person name="Shibahara T."/>
            <person name="Tanaka T."/>
            <person name="Ishii S."/>
            <person name="Yamamoto J."/>
            <person name="Saito K."/>
            <person name="Kawai Y."/>
            <person name="Isono Y."/>
            <person name="Nakamura Y."/>
            <person name="Nagahari K."/>
            <person name="Murakami K."/>
            <person name="Yasuda T."/>
            <person name="Iwayanagi T."/>
            <person name="Wagatsuma M."/>
            <person name="Shiratori A."/>
            <person name="Sudo H."/>
            <person name="Hosoiri T."/>
            <person name="Kaku Y."/>
            <person name="Kodaira H."/>
            <person name="Kondo H."/>
            <person name="Sugawara M."/>
            <person name="Takahashi M."/>
            <person name="Kanda K."/>
            <person name="Yokoi T."/>
            <person name="Furuya T."/>
            <person name="Kikkawa E."/>
            <person name="Omura Y."/>
            <person name="Abe K."/>
            <person name="Kamihara K."/>
            <person name="Katsuta N."/>
            <person name="Sato K."/>
            <person name="Tanikawa M."/>
            <person name="Yamazaki M."/>
            <person name="Ninomiya K."/>
            <person name="Ishibashi T."/>
            <person name="Yamashita H."/>
            <person name="Murakawa K."/>
            <person name="Fujimori K."/>
            <person name="Tanai H."/>
            <person name="Kimata M."/>
            <person name="Watanabe M."/>
            <person name="Hiraoka S."/>
            <person name="Chiba Y."/>
            <person name="Ishida S."/>
            <person name="Ono Y."/>
            <person name="Takiguchi S."/>
            <person name="Watanabe S."/>
            <person name="Yosida M."/>
            <person name="Hotuta T."/>
            <person name="Kusano J."/>
            <person name="Kanehori K."/>
            <person name="Takahashi-Fujii A."/>
            <person name="Hara H."/>
            <person name="Tanase T.-O."/>
            <person name="Nomura Y."/>
            <person name="Togiya S."/>
            <person name="Komai F."/>
            <person name="Hara R."/>
            <person name="Takeuchi K."/>
            <person name="Arita M."/>
            <person name="Imose N."/>
            <person name="Musashino K."/>
            <person name="Yuuki H."/>
            <person name="Oshima A."/>
            <person name="Sasaki N."/>
            <person name="Aotsuka S."/>
            <person name="Yoshikawa Y."/>
            <person name="Matsunawa H."/>
            <person name="Ichihara T."/>
            <person name="Shiohata N."/>
            <person name="Sano S."/>
            <person name="Moriya S."/>
            <person name="Momiyama H."/>
            <person name="Satoh N."/>
            <person name="Takami S."/>
            <person name="Terashima Y."/>
            <person name="Suzuki O."/>
            <person name="Nakagawa S."/>
            <person name="Senoh A."/>
            <person name="Mizoguchi H."/>
            <person name="Goto Y."/>
            <person name="Shimizu F."/>
            <person name="Wakebe H."/>
            <person name="Hishigaki H."/>
            <person name="Watanabe T."/>
            <person name="Sugiyama A."/>
            <person name="Takemoto M."/>
            <person name="Kawakami B."/>
            <person name="Yamazaki M."/>
            <person name="Watanabe K."/>
            <person name="Kumagai A."/>
            <person name="Itakura S."/>
            <person name="Fukuzumi Y."/>
            <person name="Fujimori Y."/>
            <person name="Komiyama M."/>
            <person name="Tashiro H."/>
            <person name="Tanigami A."/>
            <person name="Fujiwara T."/>
            <person name="Ono T."/>
            <person name="Yamada K."/>
            <person name="Fujii Y."/>
            <person name="Ozaki K."/>
            <person name="Hirao M."/>
            <person name="Ohmori Y."/>
            <person name="Kawabata A."/>
            <person name="Hikiji T."/>
            <person name="Kobatake N."/>
            <person name="Inagaki H."/>
            <person name="Ikema Y."/>
            <person name="Okamoto S."/>
            <person name="Okitani R."/>
            <person name="Kawakami T."/>
            <person name="Noguchi S."/>
            <person name="Itoh T."/>
            <person name="Shigeta K."/>
            <person name="Senba T."/>
            <person name="Matsumura K."/>
            <person name="Nakajima Y."/>
            <person name="Mizuno T."/>
            <person name="Morinaga M."/>
            <person name="Sasaki M."/>
            <person name="Togashi T."/>
            <person name="Oyama M."/>
            <person name="Hata H."/>
            <person name="Watanabe M."/>
            <person name="Komatsu T."/>
            <person name="Mizushima-Sugano J."/>
            <person name="Satoh T."/>
            <person name="Shirai Y."/>
            <person name="Takahashi Y."/>
            <person name="Nakagawa K."/>
            <person name="Okumura K."/>
            <person name="Nagase T."/>
            <person name="Nomura N."/>
            <person name="Kikuchi H."/>
            <person name="Masuho Y."/>
            <person name="Yamashita R."/>
            <person name="Nakai K."/>
            <person name="Yada T."/>
            <person name="Nakamura Y."/>
            <person name="Ohara O."/>
            <person name="Isogai T."/>
            <person name="Sugano S."/>
        </authorList>
    </citation>
    <scope>NUCLEOTIDE SEQUENCE [LARGE SCALE MRNA] (ISOFORM 2)</scope>
    <source>
        <tissue>Liver</tissue>
    </source>
</reference>
<reference key="6">
    <citation type="journal article" date="2005" name="Nature">
        <title>Generation and annotation of the DNA sequences of human chromosomes 2 and 4.</title>
        <authorList>
            <person name="Hillier L.W."/>
            <person name="Graves T.A."/>
            <person name="Fulton R.S."/>
            <person name="Fulton L.A."/>
            <person name="Pepin K.H."/>
            <person name="Minx P."/>
            <person name="Wagner-McPherson C."/>
            <person name="Layman D."/>
            <person name="Wylie K."/>
            <person name="Sekhon M."/>
            <person name="Becker M.C."/>
            <person name="Fewell G.A."/>
            <person name="Delehaunty K.D."/>
            <person name="Miner T.L."/>
            <person name="Nash W.E."/>
            <person name="Kremitzki C."/>
            <person name="Oddy L."/>
            <person name="Du H."/>
            <person name="Sun H."/>
            <person name="Bradshaw-Cordum H."/>
            <person name="Ali J."/>
            <person name="Carter J."/>
            <person name="Cordes M."/>
            <person name="Harris A."/>
            <person name="Isak A."/>
            <person name="van Brunt A."/>
            <person name="Nguyen C."/>
            <person name="Du F."/>
            <person name="Courtney L."/>
            <person name="Kalicki J."/>
            <person name="Ozersky P."/>
            <person name="Abbott S."/>
            <person name="Armstrong J."/>
            <person name="Belter E.A."/>
            <person name="Caruso L."/>
            <person name="Cedroni M."/>
            <person name="Cotton M."/>
            <person name="Davidson T."/>
            <person name="Desai A."/>
            <person name="Elliott G."/>
            <person name="Erb T."/>
            <person name="Fronick C."/>
            <person name="Gaige T."/>
            <person name="Haakenson W."/>
            <person name="Haglund K."/>
            <person name="Holmes A."/>
            <person name="Harkins R."/>
            <person name="Kim K."/>
            <person name="Kruchowski S.S."/>
            <person name="Strong C.M."/>
            <person name="Grewal N."/>
            <person name="Goyea E."/>
            <person name="Hou S."/>
            <person name="Levy A."/>
            <person name="Martinka S."/>
            <person name="Mead K."/>
            <person name="McLellan M.D."/>
            <person name="Meyer R."/>
            <person name="Randall-Maher J."/>
            <person name="Tomlinson C."/>
            <person name="Dauphin-Kohlberg S."/>
            <person name="Kozlowicz-Reilly A."/>
            <person name="Shah N."/>
            <person name="Swearengen-Shahid S."/>
            <person name="Snider J."/>
            <person name="Strong J.T."/>
            <person name="Thompson J."/>
            <person name="Yoakum M."/>
            <person name="Leonard S."/>
            <person name="Pearman C."/>
            <person name="Trani L."/>
            <person name="Radionenko M."/>
            <person name="Waligorski J.E."/>
            <person name="Wang C."/>
            <person name="Rock S.M."/>
            <person name="Tin-Wollam A.-M."/>
            <person name="Maupin R."/>
            <person name="Latreille P."/>
            <person name="Wendl M.C."/>
            <person name="Yang S.-P."/>
            <person name="Pohl C."/>
            <person name="Wallis J.W."/>
            <person name="Spieth J."/>
            <person name="Bieri T.A."/>
            <person name="Berkowicz N."/>
            <person name="Nelson J.O."/>
            <person name="Osborne J."/>
            <person name="Ding L."/>
            <person name="Meyer R."/>
            <person name="Sabo A."/>
            <person name="Shotland Y."/>
            <person name="Sinha P."/>
            <person name="Wohldmann P.E."/>
            <person name="Cook L.L."/>
            <person name="Hickenbotham M.T."/>
            <person name="Eldred J."/>
            <person name="Williams D."/>
            <person name="Jones T.A."/>
            <person name="She X."/>
            <person name="Ciccarelli F.D."/>
            <person name="Izaurralde E."/>
            <person name="Taylor J."/>
            <person name="Schmutz J."/>
            <person name="Myers R.M."/>
            <person name="Cox D.R."/>
            <person name="Huang X."/>
            <person name="McPherson J.D."/>
            <person name="Mardis E.R."/>
            <person name="Clifton S.W."/>
            <person name="Warren W.C."/>
            <person name="Chinwalla A.T."/>
            <person name="Eddy S.R."/>
            <person name="Marra M.A."/>
            <person name="Ovcharenko I."/>
            <person name="Furey T.S."/>
            <person name="Miller W."/>
            <person name="Eichler E.E."/>
            <person name="Bork P."/>
            <person name="Suyama M."/>
            <person name="Torrents D."/>
            <person name="Waterston R.H."/>
            <person name="Wilson R.K."/>
        </authorList>
    </citation>
    <scope>NUCLEOTIDE SEQUENCE [LARGE SCALE GENOMIC DNA]</scope>
</reference>
<reference key="7">
    <citation type="submission" date="2005-07" db="EMBL/GenBank/DDBJ databases">
        <authorList>
            <person name="Mural R.J."/>
            <person name="Istrail S."/>
            <person name="Sutton G.G."/>
            <person name="Florea L."/>
            <person name="Halpern A.L."/>
            <person name="Mobarry C.M."/>
            <person name="Lippert R."/>
            <person name="Walenz B."/>
            <person name="Shatkay H."/>
            <person name="Dew I."/>
            <person name="Miller J.R."/>
            <person name="Flanigan M.J."/>
            <person name="Edwards N.J."/>
            <person name="Bolanos R."/>
            <person name="Fasulo D."/>
            <person name="Halldorsson B.V."/>
            <person name="Hannenhalli S."/>
            <person name="Turner R."/>
            <person name="Yooseph S."/>
            <person name="Lu F."/>
            <person name="Nusskern D.R."/>
            <person name="Shue B.C."/>
            <person name="Zheng X.H."/>
            <person name="Zhong F."/>
            <person name="Delcher A.L."/>
            <person name="Huson D.H."/>
            <person name="Kravitz S.A."/>
            <person name="Mouchard L."/>
            <person name="Reinert K."/>
            <person name="Remington K.A."/>
            <person name="Clark A.G."/>
            <person name="Waterman M.S."/>
            <person name="Eichler E.E."/>
            <person name="Adams M.D."/>
            <person name="Hunkapiller M.W."/>
            <person name="Myers E.W."/>
            <person name="Venter J.C."/>
        </authorList>
    </citation>
    <scope>NUCLEOTIDE SEQUENCE [LARGE SCALE GENOMIC DNA]</scope>
</reference>
<reference key="8">
    <citation type="journal article" date="2004" name="Genome Res.">
        <title>The status, quality, and expansion of the NIH full-length cDNA project: the Mammalian Gene Collection (MGC).</title>
        <authorList>
            <consortium name="The MGC Project Team"/>
        </authorList>
    </citation>
    <scope>NUCLEOTIDE SEQUENCE [LARGE SCALE MRNA] (ISOFORM 1)</scope>
    <source>
        <tissue>Colon</tissue>
    </source>
</reference>
<reference key="9">
    <citation type="journal article" date="1995" name="Thromb. Haemost.">
        <title>Protein C Osaka 10 with aberrant propeptide processing: loss of anticoagulant activity due to an amino acid substitution in the protein C precursor.</title>
        <authorList>
            <person name="Miyata T."/>
            <person name="Zheng Y.-Z."/>
            <person name="Sakata T."/>
            <person name="Kato H."/>
        </authorList>
    </citation>
    <scope>PROTEIN SEQUENCE OF 42-57</scope>
    <scope>VARIANT THPH3 SER-42</scope>
    <source>
        <tissue>Blood</tissue>
    </source>
</reference>
<reference key="10">
    <citation type="journal article" date="1993" name="Int. J. Hematol.">
        <title>An abnormal protein C (protein C Yonago) with an amino acid substitution of Gly for Arg-15 caused by a single base mutation of C to G in codon 57 (CGG--&gt;GGG). Deteriorated calcium-dependent conformation of the gamma-carboxyglutamic acid domain relevant to a thrombotic tendency.</title>
        <authorList>
            <person name="Mimuro J."/>
            <person name="Muramatsu S."/>
            <person name="Kaneko M."/>
            <person name="Yoshitake S."/>
            <person name="Iijima K."/>
            <person name="Nakamura K."/>
            <person name="Sakata Y."/>
            <person name="Matsuda M."/>
        </authorList>
    </citation>
    <scope>NUCLEOTIDE SEQUENCE [GENOMIC DNA] OF 43-64</scope>
    <scope>VARIANT PROC DEFICIENCY GLY-57</scope>
</reference>
<reference key="11">
    <citation type="journal article" date="1984" name="Proc. Natl. Acad. Sci. U.S.A.">
        <title>Characterization of a cDNA coding for human protein C.</title>
        <authorList>
            <person name="Foster D.C."/>
            <person name="Davie E.W."/>
        </authorList>
    </citation>
    <scope>NUCLEOTIDE SEQUENCE [MRNA] OF 106-461 (ISOFORM 1)</scope>
</reference>
<reference key="12">
    <citation type="journal article" date="1994" name="Thromb. Haemost.">
        <title>Homozygous type I protein C deficiency in two unrelated families exhibiting thrombophilia related to Ala136--&gt;Pro or Arg286--&gt;His mutations.</title>
        <authorList>
            <person name="Long G.L."/>
            <person name="Tomczak J.A."/>
            <person name="Rainville I.R."/>
            <person name="Dreyfus M."/>
            <person name="Schramm W."/>
            <person name="Schwarz H.P."/>
        </authorList>
    </citation>
    <scope>NUCLEOTIDE SEQUENCE [GENOMIC DNA] OF 134-178 AND 267-332</scope>
    <scope>VARIANTS THPH4 PRO-178 AND HIS-328</scope>
</reference>
<reference key="13">
    <citation type="journal article" date="1990" name="J. Biol. Chem.">
        <title>Beta protein C is not glycosylated at asparagine 329. The rate of translation may influence the frequency of usage at asparagine-X-cysteine sites.</title>
        <authorList>
            <person name="Miletich J.P."/>
            <person name="Broze G.J. Jr."/>
        </authorList>
    </citation>
    <scope>GLYCOSYLATION AT ASN-371</scope>
</reference>
<reference key="14">
    <citation type="journal article" date="1992" name="J. Biol. Chem.">
        <title>O-linked fucose is present in the first epidermal growth factor domain of factor XII but not protein C.</title>
        <authorList>
            <person name="Harris R.J."/>
            <person name="Ling V.T."/>
            <person name="Spellman M.W."/>
        </authorList>
    </citation>
    <scope>HYDROXYLATION</scope>
</reference>
<reference key="15">
    <citation type="journal article" date="2005" name="J. Proteome Res.">
        <title>Human plasma N-glycoproteome analysis by immunoaffinity subtraction, hydrazide chemistry, and mass spectrometry.</title>
        <authorList>
            <person name="Liu T."/>
            <person name="Qian W.-J."/>
            <person name="Gritsenko M.A."/>
            <person name="Camp D.G. II"/>
            <person name="Monroe M.E."/>
            <person name="Moore R.J."/>
            <person name="Smith R.D."/>
        </authorList>
    </citation>
    <scope>GLYCOSYLATION [LARGE SCALE ANALYSIS] AT ASN-290</scope>
    <source>
        <tissue>Plasma</tissue>
    </source>
</reference>
<reference key="16">
    <citation type="journal article" date="2012" name="Mol. Cell. Proteomics">
        <title>Human urinary glycoproteomics; attachment site specific analysis of N- and O-linked glycosylations by CID and ECD.</title>
        <authorList>
            <person name="Halim A."/>
            <person name="Nilsson J."/>
            <person name="Ruetschi U."/>
            <person name="Hesse C."/>
            <person name="Larson G."/>
        </authorList>
    </citation>
    <scope>GLYCOSYLATION AT THR-19</scope>
    <scope>STRUCTURE OF CARBOHYDRATES</scope>
    <scope>IDENTIFICATION BY MASS SPECTROMETRY</scope>
</reference>
<reference key="17">
    <citation type="journal article" date="2014" name="J. Proteomics">
        <title>An enzyme assisted RP-RPLC approach for in-depth analysis of human liver phosphoproteome.</title>
        <authorList>
            <person name="Bian Y."/>
            <person name="Song C."/>
            <person name="Cheng K."/>
            <person name="Dong M."/>
            <person name="Wang F."/>
            <person name="Huang J."/>
            <person name="Sun D."/>
            <person name="Wang L."/>
            <person name="Ye M."/>
            <person name="Zou H."/>
        </authorList>
    </citation>
    <scope>IDENTIFICATION BY MASS SPECTROMETRY [LARGE SCALE ANALYSIS]</scope>
    <source>
        <tissue>Liver</tissue>
    </source>
</reference>
<reference key="18">
    <citation type="journal article" date="2015" name="Cell">
        <title>A single kinase generates the majority of the secreted phosphoproteome.</title>
        <authorList>
            <person name="Tagliabracci V.S."/>
            <person name="Wiley S.E."/>
            <person name="Guo X."/>
            <person name="Kinch L.N."/>
            <person name="Durrant E."/>
            <person name="Wen J."/>
            <person name="Xiao J."/>
            <person name="Cui J."/>
            <person name="Nguyen K.B."/>
            <person name="Engel J.L."/>
            <person name="Coon J.J."/>
            <person name="Grishin N."/>
            <person name="Pinna L.A."/>
            <person name="Pagliarini D.J."/>
            <person name="Dixon J.E."/>
        </authorList>
    </citation>
    <scope>PHOSPHORYLATION AT SER-347</scope>
</reference>
<reference key="19">
    <citation type="journal article" date="2021" name="Int. J. Mol. Sci.">
        <title>Ixodes ricinus Salivary Serpin Iripin-8 Inhibits the Intrinsic Pathway of Coagulation and Complement.</title>
        <authorList>
            <person name="Kotal J."/>
            <person name="Polderdijk S.G.I."/>
            <person name="Langhansova H."/>
            <person name="Ederova M."/>
            <person name="Martins L.A."/>
            <person name="Berankova Z."/>
            <person name="Chlastakova A."/>
            <person name="Hajdusek O."/>
            <person name="Kotsyfakis M."/>
            <person name="Huntington J.A."/>
            <person name="Chmelar J."/>
        </authorList>
    </citation>
    <scope>INTERACTION WITH TICK IRIPIN-8</scope>
</reference>
<reference key="20">
    <citation type="journal article" date="1994" name="Protein Sci.">
        <title>Models of the serine protease domain of the human antithrombotic plasma factor activated protein C and its zymogen.</title>
        <authorList>
            <person name="Fisher C.L."/>
            <person name="Greengard J.S."/>
            <person name="Griffin J.H."/>
        </authorList>
    </citation>
    <scope>3D-STRUCTURE MODELING OF 175-450</scope>
</reference>
<reference key="21">
    <citation type="journal article" date="1996" name="EMBO J.">
        <title>The 2.8 A crystal structure of Gla-domainless activated protein C.</title>
        <authorList>
            <person name="Mather T."/>
            <person name="Oganessyan V."/>
            <person name="Hof P."/>
            <person name="Huber R."/>
            <person name="Foundling S."/>
            <person name="Esmon C."/>
            <person name="Bode W."/>
        </authorList>
    </citation>
    <scope>X-RAY CRYSTALLOGRAPHY (2.8 ANGSTROMS) OF 84-461</scope>
</reference>
<reference key="22">
    <citation type="journal article" date="1993" name="Thromb. Haemost.">
        <title>Protein C deficiency: a database of mutations.</title>
        <authorList>
            <person name="Reitsma P.H."/>
            <person name="Poort S.R."/>
            <person name="Bernardi F."/>
            <person name="Gandrille S."/>
            <person name="Long G.L."/>
            <person name="Sala N."/>
            <person name="Cooper D.N."/>
        </authorList>
    </citation>
    <scope>REVIEW ON PROC VARIANTS</scope>
</reference>
<reference key="23">
    <citation type="journal article" date="1987" name="Proc. Natl. Acad. Sci. U.S.A.">
        <title>Hereditary thrombophilia: identification of nonsense and missense mutations in the protein C gene.</title>
        <authorList>
            <person name="Romeo G."/>
            <person name="Hassan H.J."/>
            <person name="Staempfli S."/>
            <person name="Roncuzzi L."/>
            <person name="Cianetti L."/>
            <person name="Leonardi A."/>
            <person name="Vicente V."/>
            <person name="Mannucci P.M."/>
            <person name="Bertina R.M."/>
            <person name="Peschle C."/>
            <person name="Cortese R."/>
        </authorList>
    </citation>
    <scope>VARIANT THPH3 CYS-444</scope>
</reference>
<reference key="24">
    <citation type="journal article" date="1989" name="Nucleic Acids Res.">
        <title>Protein C London 1: recurrent mutation at Arg-169 (CGG--&gt;TGG) in the protein C gene causing thrombosis.</title>
        <authorList>
            <person name="Grundy C.B."/>
            <person name="Chitolie A."/>
            <person name="Talbot S."/>
            <person name="Bevan D."/>
            <person name="Kakkar V.V."/>
            <person name="Cooper D.N."/>
        </authorList>
    </citation>
    <scope>VARIANT THPH3 TRP-211</scope>
</reference>
<reference key="25">
    <citation type="journal article" date="1991" name="Blood">
        <title>The spectrum of genetic defects in a panel of 40 Dutch families with symptomatic protein C deficiency type I: heterogeneity and founder effects.</title>
        <authorList>
            <person name="Reitsma P.H."/>
            <person name="Poort S.R."/>
            <person name="Allaart C.F."/>
            <person name="Briet E."/>
            <person name="Bertina R.M."/>
        </authorList>
    </citation>
    <scope>VARIANT THPH3 CYS-272</scope>
</reference>
<reference key="26">
    <citation type="journal article" date="1992" name="Blood">
        <title>Protein CVermont: symptomatic type II protein C deficiency associated with two GLA domain mutations.</title>
        <authorList>
            <person name="Bovill E.G."/>
            <person name="Tomczak J.A."/>
            <person name="Grant B."/>
            <person name="Bhushan F."/>
            <person name="Pillemer E."/>
            <person name="Rainville I.R."/>
            <person name="Long G.L."/>
        </authorList>
    </citation>
    <scope>VARIANTS THPH3 ALA-62 AND MET-76</scope>
</reference>
<reference key="27">
    <citation type="journal article" date="1992" name="Blood">
        <title>Protein C deficiency Hong Kong 1 and 2: hereditary protein C deficiency caused by two mutant alleles, a 5-nucleotide deletion and a missense mutation.</title>
        <authorList>
            <person name="Sugahara Y."/>
            <person name="Miura O."/>
            <person name="Yuen P."/>
            <person name="Aoki N."/>
        </authorList>
    </citation>
    <scope>VARIANT THPH4 ASP-418</scope>
</reference>
<reference key="28">
    <citation type="journal article" date="1992" name="Hum. Genet.">
        <title>A novel homozygous missense mutation in the protein C (PROC) gene causing recurrent venous thrombosis.</title>
        <authorList>
            <person name="Grundy C.B."/>
            <person name="Chisholm M."/>
            <person name="Kakkar V.V."/>
            <person name="Cooper D.N."/>
        </authorList>
    </citation>
    <scope>VARIANT THPH4 LEU-289</scope>
</reference>
<reference key="29">
    <citation type="journal article" date="1992" name="Hum. Genet.">
        <title>Two different missense mutations at Arg 178 of the protein C (PROC) gene causing recurrent venous thrombosis.</title>
        <authorList>
            <person name="Grundy C.B."/>
            <person name="Schulman S."/>
            <person name="Tengborn L."/>
            <person name="Kakkar V.V."/>
            <person name="Cooper D.N."/>
        </authorList>
    </citation>
    <scope>VARIANTS THPH3 GLN-220 AND TRP-220</scope>
</reference>
<reference key="30">
    <citation type="journal article" date="1992" name="Hum. Mutat.">
        <title>Two novel mutations responsible for hereditary type I protein C deficiency: characterization by denaturing gradient gel electrophoresis.</title>
        <authorList>
            <person name="Gandrille S."/>
            <person name="Vidaud M."/>
            <person name="Aiach M."/>
            <person name="Alhenc-Gelas M."/>
            <person name="Fischer A.M."/>
            <person name="Gouault-Heilman M."/>
            <person name="Toulon P."/>
            <person name="Fiessinger J.-N."/>
            <person name="Goossens M."/>
        </authorList>
    </citation>
    <scope>VARIANT THPH3 GLN-220</scope>
</reference>
<reference key="31">
    <citation type="journal article" date="1992" name="J. Lab. Clin. Med.">
        <title>Homozygous protein C deficiency: identification of a novel missense mutation that causes impaired secretion of the mutant protein C.</title>
        <authorList>
            <person name="Yamamoto K."/>
            <person name="Matsushita T."/>
            <person name="Sugiura I."/>
            <person name="Takamatsu J."/>
            <person name="Iwasaki E."/>
            <person name="Wada H."/>
            <person name="Deguchi K."/>
            <person name="Shirakawa S."/>
            <person name="Saito H."/>
        </authorList>
    </citation>
    <scope>VARIANT THPH4 SER-334</scope>
</reference>
<reference key="32">
    <citation type="journal article" date="1993" name="Blood">
        <title>Five novel mutations located in exons III and IX of the protein C gene in patients presenting with defective protein C anticoagulant activity.</title>
        <authorList>
            <person name="Gandrille S."/>
            <person name="Alhenc-Gelas M."/>
            <person name="Gaussem P."/>
            <person name="Aillaud M.-F."/>
            <person name="Dupuy E."/>
            <person name="Juhan-Vague I."/>
            <person name="Aiach M."/>
        </authorList>
    </citation>
    <scope>VARIANTS TRP-38; CYS-42; HIS-42; GLN-271 AND ASN-294</scope>
</reference>
<reference key="33">
    <citation type="journal article" date="1993" name="Blood Coagul. Fibrinolysis">
        <title>Twelve novel and two recurrent mutations in 14 Austrian families with hereditary protein C deficiency.</title>
        <authorList>
            <person name="Poort S.R."/>
            <person name="Pabinger-Fasching I."/>
            <person name="Mannhalter C."/>
            <person name="Reitsma P.H."/>
            <person name="Bertina R.M."/>
        </authorList>
    </citation>
    <scope>VARIANTS GLY-14; GLN-211; TYR-244; GLN-253; LEU-321; CYS-328; ILE-385; THR-388 AND VAL-388</scope>
</reference>
<reference key="34">
    <citation type="journal article" date="1993" name="Blood Coagul. Fibrinolysis">
        <title>A Gla domain mutation (Arg 15--&gt;Trp) in the protein C (PROC) gene causing type 2 protein C deficiency and recurrent venous thrombosis.</title>
        <authorList>
            <person name="Millar D.S."/>
            <person name="Grundy C.B."/>
            <person name="Bignell P."/>
            <person name="Moffat E.H."/>
            <person name="Martin R."/>
            <person name="Kakkar V.V."/>
            <person name="Cooper D.N."/>
        </authorList>
    </citation>
    <scope>VARIANT THPH3 TRP-57</scope>
</reference>
<reference key="35">
    <citation type="journal article" date="1993" name="Blood Coagul. Fibrinolysis">
        <title>Genetic mutations in ten unrelated American patients with symptomatic type 1 protein C deficiency.</title>
        <authorList>
            <person name="Tsay W."/>
            <person name="Greengard J.S."/>
            <person name="Montgomery R.R."/>
            <person name="McPherson R.A."/>
            <person name="Fucci J.C."/>
            <person name="Koerper M.A."/>
            <person name="Coughlin J."/>
            <person name="Griffin J.H."/>
        </authorList>
    </citation>
    <scope>VARIANTS THPH3 ARG-145; LEU-210; TRP-211; THR-243; LEU-321; MET-340 AND TYR-426</scope>
</reference>
<reference key="36">
    <citation type="journal article" date="1993" name="Br. J. Haematol.">
        <title>Symptomatic type II protein C deficiency caused by a missense mutation (Gly 381--&gt;Ser) in the substrate-binding pocket.</title>
        <authorList>
            <person name="Marchetti G."/>
            <person name="Patracchini P."/>
            <person name="Gemmati D."/>
            <person name="Castaman G."/>
            <person name="Rodeghiero F."/>
            <person name="Wacey A."/>
            <person name="Cooper D.N."/>
            <person name="Tuddenham E.G."/>
            <person name="Bernardi F."/>
        </authorList>
    </citation>
    <scope>VARIANT THPH3 SER-423</scope>
</reference>
<reference key="37">
    <citation type="journal article" date="1994" name="Blood">
        <title>First de novo mutations in the protein C gene of two patients with type I deficiency: a missense mutation and a splice site deletion.</title>
        <authorList>
            <person name="Gandrille S."/>
            <person name="Jude B."/>
            <person name="Alhenc-Gelas M."/>
            <person name="Emmerich J."/>
            <person name="Aiach M."/>
        </authorList>
    </citation>
    <scope>VARIANT PRO-312</scope>
</reference>
<reference key="38">
    <citation type="journal article" date="1994" name="Blood Coagul. Fibrinolysis">
        <title>A homozygous deletion/insertion mutation in the protein C (PROC) gene causing neonatal Purpura fulminans: prenatal diagnosis in an at-risk pregnancy.</title>
        <authorList>
            <person name="Millar D.S."/>
            <person name="Allgrove J."/>
            <person name="Rodeck C."/>
            <person name="Kakkar V.V."/>
            <person name="Cooper D.N."/>
        </authorList>
    </citation>
    <scope>VARIANT THPH4 144-ASN-GLY-145 DELINS LYS</scope>
</reference>
<reference key="39">
    <citation type="journal article" date="1994" name="Blood Coagul. Fibrinolysis">
        <title>A novel homozygous missense mutation (Val 325--&gt;Ala) in the protein C gene causing neonatal purpura fulminans.</title>
        <authorList>
            <person name="Witt I."/>
            <person name="Beck S."/>
            <person name="Seydewitz H.H."/>
            <person name="Tasangil C."/>
            <person name="Schenck W."/>
        </authorList>
    </citation>
    <scope>VARIANT THPH4 ALA-367</scope>
</reference>
<reference key="40">
    <citation type="journal article" date="1994" name="Blood Coagul. Fibrinolysis">
        <title>Six missense mutations associated with type I and type II protein C deficiency and implications obtained from molecular modelling.</title>
        <authorList>
            <person name="Zheng Y.-Z."/>
            <person name="Sakata T."/>
            <person name="Matsusue T."/>
            <person name="Umeyama H."/>
            <person name="Kato H."/>
            <person name="Miyata T."/>
        </authorList>
    </citation>
    <scope>VARIANTS THPH3 LEU-369; ARG-392; ASN-401 AND HIS-441</scope>
</reference>
<reference key="41">
    <citation type="journal article" date="1994" name="Thromb. Haemost.">
        <title>Influence of six mutations of the protein C gene on the Gla domain conformation and calcium affinity.</title>
        <authorList>
            <person name="Gaussem P."/>
            <person name="Gandrille S."/>
            <person name="Duchemin J."/>
            <person name="Emmerich J."/>
            <person name="Alhenc-Gelas M."/>
            <person name="Aillaud M.-F."/>
            <person name="Aiach M."/>
        </authorList>
    </citation>
    <scope>VARIANT ASP-49</scope>
</reference>
<reference key="42">
    <citation type="journal article" date="1995" name="Blood Coagul. Fibrinolysis">
        <title>Three novel mutations in the protein C (PROC) gene causing venous thrombosis.</title>
        <authorList>
            <person name="Millar D.S."/>
            <person name="Bevan D."/>
            <person name="Chitolie A."/>
            <person name="Reynaud J."/>
            <person name="Chisholm M."/>
            <person name="Kakkar V.V."/>
            <person name="Cooper D.N."/>
        </authorList>
    </citation>
    <scope>VARIANTS CYS-89; PRO-220 AND THR-301</scope>
</reference>
<reference key="43">
    <citation type="journal article" date="1995" name="Thromb. Haemost.">
        <title>Six different point mutations in seven Danish families with symptomatic protein C deficiency.</title>
        <authorList>
            <person name="Lind B."/>
            <person name="Schwartz M."/>
            <person name="Thorsen S."/>
        </authorList>
    </citation>
    <scope>VARIANTS THPH3 TRP-57; ARG-114; ARG-324; CYS-328 AND LEU-369</scope>
    <scope>VARIANT THR-43</scope>
</reference>
<reference key="44">
    <citation type="journal article" date="1996" name="Hum. Mutat.">
        <title>Two novel (R(-11)C; T394D) and two repeat missense mutations in the protein C gene associated with venous thrombosis in six kindreds.</title>
        <authorList>
            <person name="Ireland H.A."/>
            <person name="Boisclair M.D."/>
            <person name="Taylor J."/>
            <person name="Thompson E."/>
            <person name="Thein S.L."/>
            <person name="Girolami A."/>
            <person name="de Caterina M."/>
            <person name="Scopacasa F."/>
            <person name="de Stefano V."/>
            <person name="Leone G."/>
            <person name="Finazzi G."/>
            <person name="Cohen H."/>
            <person name="Lane D.A."/>
        </authorList>
    </citation>
    <scope>VARIANTS THPH3 CYS-32 AND ASN-436</scope>
</reference>
<reference key="45">
    <citation type="journal article" date="1998" name="Thromb. Haemost.">
        <title>Type I protein C deficiency in French Canadians: evidence of a founder effect and association of specific protein C gene mutations with plasma protein C levels.</title>
        <authorList>
            <person name="Couture P."/>
            <person name="Demers C."/>
            <person name="Morissette J."/>
            <person name="Delage R."/>
            <person name="Jomphe M."/>
            <person name="Couture L."/>
            <person name="Simard J."/>
        </authorList>
    </citation>
    <scope>VARIANTS THPH3 GLN-220 AND MET-340</scope>
</reference>
<reference key="46">
    <citation type="journal article" date="2012" name="Pathology">
        <title>Homozygous protein C deficiency with late onset venous thrombosis: identification and in vitro expression study of a novel Pro275Ser mutation.</title>
        <authorList>
            <person name="Yu T."/>
            <person name="Dai J."/>
            <person name="Liu H."/>
            <person name="Wang J."/>
            <person name="Ding Q."/>
            <person name="Wang H."/>
            <person name="Wang X."/>
            <person name="Fu Q."/>
        </authorList>
    </citation>
    <scope>VARIANT SER-317</scope>
    <scope>CHARACTERIZATION OF SER-317</scope>
    <scope>SUBCELLULAR LOCATION</scope>
</reference>
<reference key="47">
    <citation type="journal article" date="2012" name="PLoS ONE">
        <title>Genetic background analysis of protein C deficiency demonstrates a recurrent mutation associated with venous thrombosis in Chinese population.</title>
        <authorList>
            <person name="Tang L."/>
            <person name="Guo T."/>
            <person name="Yang R."/>
            <person name="Mei H."/>
            <person name="Wang H."/>
            <person name="Lu X."/>
            <person name="Yu J."/>
            <person name="Wang Q."/>
            <person name="Hu Y."/>
        </authorList>
    </citation>
    <scope>VARIANTS GLU-70; GLY-106; ALA-118; TYR-175; VAL-181; TRP-189; GLN-211; TRP-220; ARG-223; GLY-240; HIS-297; LEU-312; VAL-327 AND LEU-420</scope>
</reference>
<reference key="48">
    <citation type="journal article" date="2015" name="Blood">
        <title>Protein C Thr315Ala variant results in gain of function but manifests as type II deficiency in diagnostic assays.</title>
        <authorList>
            <person name="Ding Q."/>
            <person name="Yang L."/>
            <person name="Dinarvand P."/>
            <person name="Wang X."/>
            <person name="Rezaie A.R."/>
        </authorList>
    </citation>
    <scope>VARIANT ALA-357</scope>
    <scope>CHARACTERIZATION OF ALA-357</scope>
    <scope>FUNCTION</scope>
</reference>
<reference key="49">
    <citation type="journal article" date="2015" name="Gene">
        <title>Compound heterozygous protein C deficiency in a family with venous thrombosis: Identification and in vitro study of p.Asp297His and p.Val420Leu mutations.</title>
        <authorList>
            <person name="Liu H."/>
            <person name="Wang H.F."/>
            <person name="Tang L."/>
            <person name="Yang Y."/>
            <person name="Wang Q.Y."/>
            <person name="Zeng W."/>
            <person name="Wu Y.Y."/>
            <person name="Cheng Z.P."/>
            <person name="Hu B."/>
            <person name="Guo T."/>
            <person name="Hu Y."/>
        </authorList>
    </citation>
    <scope>VARIANTS THPH3 HIS-297 AND LEU-420</scope>
    <scope>CHARACTERIZATION OF VARIANTS THPH3 HIS-297 AND LEU-420</scope>
    <scope>SUBCELLULAR LOCATION</scope>
</reference>
<reference key="50">
    <citation type="journal article" date="2015" name="Thromb. Res.">
        <title>Molecular characterization of p.Asp77Gly and the novel p.Ala163Val and p.Ala163Glu mutations causing protein C deficiency.</title>
        <authorList>
            <person name="Kovacs K.B."/>
            <person name="Pataki I."/>
            <person name="Bardos H."/>
            <person name="Fekete A."/>
            <person name="Pfliegler G."/>
            <person name="Haramura G."/>
            <person name="Gindele R."/>
            <person name="Komaromi I."/>
            <person name="Balla G."/>
            <person name="Adany R."/>
            <person name="Muszbek L."/>
            <person name="Bereczky Z."/>
        </authorList>
    </citation>
    <scope>VARIANTS THPH4 GLY-77 AND GLU-163</scope>
    <scope>VARIANT THPH3 VAL-163</scope>
    <scope>FUNCTION AS ANTICOAGULANT</scope>
    <scope>SUBCELLULAR LOCATION</scope>
    <scope>CHARACTERIZATION OF VARIANTS THPH4 GLY-77 AND GLU-163</scope>
    <scope>CHARACTERIZATION OF VARIANT THPH3 VAL-163</scope>
</reference>
<accession>P04070</accession>
<accession>B4DPQ7</accession>
<accession>Q15189</accession>
<accession>Q15190</accession>
<accession>Q16001</accession>
<accession>Q53S74</accession>
<accession>Q9UC55</accession>
<gene>
    <name type="primary">PROC</name>
</gene>
<organism>
    <name type="scientific">Homo sapiens</name>
    <name type="common">Human</name>
    <dbReference type="NCBI Taxonomy" id="9606"/>
    <lineage>
        <taxon>Eukaryota</taxon>
        <taxon>Metazoa</taxon>
        <taxon>Chordata</taxon>
        <taxon>Craniata</taxon>
        <taxon>Vertebrata</taxon>
        <taxon>Euteleostomi</taxon>
        <taxon>Mammalia</taxon>
        <taxon>Eutheria</taxon>
        <taxon>Euarchontoglires</taxon>
        <taxon>Primates</taxon>
        <taxon>Haplorrhini</taxon>
        <taxon>Catarrhini</taxon>
        <taxon>Hominidae</taxon>
        <taxon>Homo</taxon>
    </lineage>
</organism>
<comment type="function">
    <text evidence="19 20">Protein C is a vitamin K-dependent serine protease that regulates blood coagulation by inactivating factors Va and VIIIa in the presence of calcium ions and phospholipids (PubMed:25618265). Exerts a protective effect on the endothelial cell barrier function (PubMed:25651845).</text>
</comment>
<comment type="catalytic activity">
    <reaction>
        <text>Degradation of blood coagulation factors Va and VIIIa.</text>
        <dbReference type="EC" id="3.4.21.69"/>
    </reaction>
</comment>
<comment type="subunit">
    <text evidence="25">Synthesized as a single chain precursor, which is cleaved into a light chain and a heavy chain held together by a disulfide bond. The enzyme is then activated by thrombin, which cleaves a tetradecapeptide from the amino end of the heavy chain; this reaction, which occurs at the surface of endothelial cells, is strongly promoted by thrombomodulin. Interacts (activated) with iripin-8, a serine protease inhibitor from Ixodes ricinus saliva (PubMed:34502392).</text>
</comment>
<comment type="interaction">
    <interactant intactId="EBI-1383018">
        <id>P04070</id>
    </interactant>
    <interactant intactId="EBI-3867333">
        <id>A8MQ03</id>
        <label>CYSRT1</label>
    </interactant>
    <organismsDiffer>false</organismsDiffer>
    <experiments>3</experiments>
</comment>
<comment type="interaction">
    <interactant intactId="EBI-1383018">
        <id>P04070</id>
    </interactant>
    <interactant intactId="EBI-1383043">
        <id>P51511</id>
        <label>MMP15</label>
    </interactant>
    <organismsDiffer>false</organismsDiffer>
    <experiments>2</experiments>
</comment>
<comment type="subcellular location">
    <subcellularLocation>
        <location evidence="19">Secreted</location>
    </subcellularLocation>
    <subcellularLocation>
        <location evidence="16 21">Golgi apparatus</location>
    </subcellularLocation>
    <subcellularLocation>
        <location evidence="16 21">Endoplasmic reticulum</location>
    </subcellularLocation>
</comment>
<comment type="alternative products">
    <event type="alternative splicing"/>
    <isoform>
        <id>P04070-1</id>
        <name>1</name>
        <sequence type="displayed"/>
    </isoform>
    <isoform>
        <id>P04070-2</id>
        <name>2</name>
        <sequence type="described" ref="VSP_054393 VSP_054394"/>
    </isoform>
</comment>
<comment type="tissue specificity">
    <text>Plasma; synthesized in the liver.</text>
</comment>
<comment type="PTM">
    <text>The vitamin K-dependent, enzymatic carboxylation of some Glu residues allows the modified protein to bind calcium.</text>
</comment>
<comment type="PTM">
    <text evidence="12 13 15 24">N- and O-glycosylated. Partial (70%) N-glycosylation of Asn-371 with an atypical N-X-C site produces a higher molecular weight form referred to as alpha. The lower molecular weight form, not N-glycosylated at Asn-371, is beta. O-glycosylated with core 1 or possibly core 8 glycans.</text>
</comment>
<comment type="PTM">
    <text evidence="9 24">The iron and 2-oxoglutarate dependent 3-hydroxylation of aspartate and asparagine is (R) stereospecific within EGF domains.</text>
</comment>
<comment type="PTM">
    <text>May be phosphorylated on a Ser or Thr in a region (AA 25-30) of the propeptide.</text>
</comment>
<comment type="disease" evidence="5 6 8 14 18 19 21 22 27 30 34 36 39 40 41 42">
    <disease id="DI-00956">
        <name>Thrombophilia due to protein C deficiency, autosomal dominant</name>
        <acronym>THPH3</acronym>
        <description>A hemostatic disorder characterized by impaired regulation of blood coagulation and a tendency to recurrent venous thrombosis. Individuals with decreased amounts of protein C are classically referred to as having type I protein C deficiency and those with normal amounts of a functionally defective protein as having type II deficiency.</description>
        <dbReference type="MIM" id="176860"/>
    </disease>
    <text>The disease is caused by variants affecting the gene represented in this entry.</text>
</comment>
<comment type="disease" evidence="7 10 11 19 28 29 31">
    <disease id="DI-00957">
        <name>Thrombophilia due to protein C deficiency, autosomal recessive</name>
        <acronym>THPH4</acronym>
        <description>A hemostatic disorder characterized by impaired regulation of blood coagulation and a tendency to recurrent venous thrombosis. It results in a thrombotic condition that can manifest as a severe neonatal disorder or as a milder disorder with late-onset thrombophilia. The severe form leads to neonatal death through massive neonatal venous thrombosis. Often associated with ecchymotic skin lesions which can turn necrotic called purpura fulminans, this disorder is very rare.</description>
        <dbReference type="MIM" id="612304"/>
    </disease>
    <text>The disease is caused by variants affecting the gene represented in this entry.</text>
</comment>
<comment type="miscellaneous">
    <text>Calcium also binds, with stronger affinity to another site, beyond the GLA domain. This GLA-independent binding site is necessary for the recognition of the thrombin-thrombomodulin complex.</text>
</comment>
<comment type="similarity">
    <text evidence="3">Belongs to the peptidase S1 family.</text>
</comment>
<comment type="sequence caution" evidence="44">
    <conflict type="erroneous termination">
        <sequence resource="EMBL" id="S76088"/>
    </conflict>
    <text>Truncated C-terminus.</text>
</comment>
<comment type="online information" name="Wikipedia">
    <link uri="https://en.wikipedia.org/wiki/Protein_C"/>
    <text>Protein C entry</text>
</comment>
<proteinExistence type="evidence at protein level"/>
<protein>
    <recommendedName>
        <fullName>Vitamin K-dependent protein C</fullName>
        <ecNumber>3.4.21.69</ecNumber>
    </recommendedName>
    <alternativeName>
        <fullName>Anticoagulant protein C</fullName>
    </alternativeName>
    <alternativeName>
        <fullName>Autoprothrombin IIA</fullName>
    </alternativeName>
    <alternativeName>
        <fullName>Blood coagulation factor XIV</fullName>
    </alternativeName>
    <component>
        <recommendedName>
            <fullName>Vitamin K-dependent protein C light chain</fullName>
        </recommendedName>
    </component>
    <component>
        <recommendedName>
            <fullName>Vitamin K-dependent protein C heavy chain</fullName>
        </recommendedName>
    </component>
    <component>
        <recommendedName>
            <fullName>Activation peptide</fullName>
        </recommendedName>
    </component>
</protein>
<keyword id="KW-0002">3D-structure</keyword>
<keyword id="KW-0025">Alternative splicing</keyword>
<keyword id="KW-0094">Blood coagulation</keyword>
<keyword id="KW-0106">Calcium</keyword>
<keyword id="KW-0165">Cleavage on pair of basic residues</keyword>
<keyword id="KW-0903">Direct protein sequencing</keyword>
<keyword id="KW-0225">Disease variant</keyword>
<keyword id="KW-1015">Disulfide bond</keyword>
<keyword id="KW-0245">EGF-like domain</keyword>
<keyword id="KW-0256">Endoplasmic reticulum</keyword>
<keyword id="KW-0301">Gamma-carboxyglutamic acid</keyword>
<keyword id="KW-0325">Glycoprotein</keyword>
<keyword id="KW-0333">Golgi apparatus</keyword>
<keyword id="KW-0356">Hemostasis</keyword>
<keyword id="KW-0378">Hydrolase</keyword>
<keyword id="KW-0379">Hydroxylation</keyword>
<keyword id="KW-0597">Phosphoprotein</keyword>
<keyword id="KW-0645">Protease</keyword>
<keyword id="KW-1267">Proteomics identification</keyword>
<keyword id="KW-1185">Reference proteome</keyword>
<keyword id="KW-0677">Repeat</keyword>
<keyword id="KW-0964">Secreted</keyword>
<keyword id="KW-0720">Serine protease</keyword>
<keyword id="KW-0732">Signal</keyword>
<keyword id="KW-0792">Thrombophilia</keyword>
<keyword id="KW-0865">Zymogen</keyword>
<evidence type="ECO:0000255" key="1"/>
<evidence type="ECO:0000255" key="2">
    <source>
        <dbReference type="PROSITE-ProRule" id="PRU00076"/>
    </source>
</evidence>
<evidence type="ECO:0000255" key="3">
    <source>
        <dbReference type="PROSITE-ProRule" id="PRU00274"/>
    </source>
</evidence>
<evidence type="ECO:0000255" key="4">
    <source>
        <dbReference type="PROSITE-ProRule" id="PRU00463"/>
    </source>
</evidence>
<evidence type="ECO:0000269" key="5">
    <source>
    </source>
</evidence>
<evidence type="ECO:0000269" key="6">
    <source>
    </source>
</evidence>
<evidence type="ECO:0000269" key="7">
    <source>
    </source>
</evidence>
<evidence type="ECO:0000269" key="8">
    <source>
    </source>
</evidence>
<evidence type="ECO:0000269" key="9">
    <source>
    </source>
</evidence>
<evidence type="ECO:0000269" key="10">
    <source>
    </source>
</evidence>
<evidence type="ECO:0000269" key="11">
    <source>
    </source>
</evidence>
<evidence type="ECO:0000269" key="12">
    <source>
    </source>
</evidence>
<evidence type="ECO:0000269" key="13">
    <source>
    </source>
</evidence>
<evidence type="ECO:0000269" key="14">
    <source>
    </source>
</evidence>
<evidence type="ECO:0000269" key="15">
    <source>
    </source>
</evidence>
<evidence type="ECO:0000269" key="16">
    <source>
    </source>
</evidence>
<evidence type="ECO:0000269" key="17">
    <source>
    </source>
</evidence>
<evidence type="ECO:0000269" key="18">
    <source>
    </source>
</evidence>
<evidence type="ECO:0000269" key="19">
    <source>
    </source>
</evidence>
<evidence type="ECO:0000269" key="20">
    <source>
    </source>
</evidence>
<evidence type="ECO:0000269" key="21">
    <source>
    </source>
</evidence>
<evidence type="ECO:0000269" key="22">
    <source>
    </source>
</evidence>
<evidence type="ECO:0000269" key="23">
    <source>
    </source>
</evidence>
<evidence type="ECO:0000269" key="24">
    <source>
    </source>
</evidence>
<evidence type="ECO:0000269" key="25">
    <source>
    </source>
</evidence>
<evidence type="ECO:0000269" key="26">
    <source>
    </source>
</evidence>
<evidence type="ECO:0000269" key="27">
    <source>
    </source>
</evidence>
<evidence type="ECO:0000269" key="28">
    <source>
    </source>
</evidence>
<evidence type="ECO:0000269" key="29">
    <source>
    </source>
</evidence>
<evidence type="ECO:0000269" key="30">
    <source>
    </source>
</evidence>
<evidence type="ECO:0000269" key="31">
    <source>
    </source>
</evidence>
<evidence type="ECO:0000269" key="32">
    <source>
    </source>
</evidence>
<evidence type="ECO:0000269" key="33">
    <source>
    </source>
</evidence>
<evidence type="ECO:0000269" key="34">
    <source>
    </source>
</evidence>
<evidence type="ECO:0000269" key="35">
    <source>
    </source>
</evidence>
<evidence type="ECO:0000269" key="36">
    <source>
    </source>
</evidence>
<evidence type="ECO:0000269" key="37">
    <source>
    </source>
</evidence>
<evidence type="ECO:0000269" key="38">
    <source>
    </source>
</evidence>
<evidence type="ECO:0000269" key="39">
    <source>
    </source>
</evidence>
<evidence type="ECO:0000269" key="40">
    <source>
    </source>
</evidence>
<evidence type="ECO:0000269" key="41">
    <source>
    </source>
</evidence>
<evidence type="ECO:0000269" key="42">
    <source>
    </source>
</evidence>
<evidence type="ECO:0000303" key="43">
    <source>
    </source>
</evidence>
<evidence type="ECO:0000305" key="44"/>
<evidence type="ECO:0007829" key="45">
    <source>
        <dbReference type="PDB" id="1AUT"/>
    </source>
</evidence>
<evidence type="ECO:0007829" key="46">
    <source>
        <dbReference type="PDB" id="1LQV"/>
    </source>
</evidence>
<evidence type="ECO:0007829" key="47">
    <source>
        <dbReference type="PDB" id="6M3B"/>
    </source>
</evidence>
<dbReference type="EC" id="3.4.21.69"/>
<dbReference type="EMBL" id="X02750">
    <property type="protein sequence ID" value="CAA26528.1"/>
    <property type="molecule type" value="mRNA"/>
</dbReference>
<dbReference type="EMBL" id="M11228">
    <property type="protein sequence ID" value="AAA60166.1"/>
    <property type="molecule type" value="Genomic_DNA"/>
</dbReference>
<dbReference type="EMBL" id="M12712">
    <property type="protein sequence ID" value="AAA60165.1"/>
    <property type="molecule type" value="Genomic_DNA"/>
</dbReference>
<dbReference type="EMBL" id="M12683">
    <property type="protein sequence ID" value="AAA60165.1"/>
    <property type="status" value="JOINED"/>
    <property type="molecule type" value="Genomic_DNA"/>
</dbReference>
<dbReference type="EMBL" id="M12684">
    <property type="protein sequence ID" value="AAA60165.1"/>
    <property type="status" value="JOINED"/>
    <property type="molecule type" value="Genomic_DNA"/>
</dbReference>
<dbReference type="EMBL" id="M12685">
    <property type="protein sequence ID" value="AAA60165.1"/>
    <property type="status" value="JOINED"/>
    <property type="molecule type" value="Genomic_DNA"/>
</dbReference>
<dbReference type="EMBL" id="M12686">
    <property type="protein sequence ID" value="AAA60165.1"/>
    <property type="status" value="JOINED"/>
    <property type="molecule type" value="Genomic_DNA"/>
</dbReference>
<dbReference type="EMBL" id="M12687">
    <property type="protein sequence ID" value="AAA60165.1"/>
    <property type="status" value="JOINED"/>
    <property type="molecule type" value="Genomic_DNA"/>
</dbReference>
<dbReference type="EMBL" id="AF378903">
    <property type="protein sequence ID" value="AAK56377.1"/>
    <property type="molecule type" value="Genomic_DNA"/>
</dbReference>
<dbReference type="EMBL" id="AK298454">
    <property type="protein sequence ID" value="BAG60669.1"/>
    <property type="molecule type" value="mRNA"/>
</dbReference>
<dbReference type="EMBL" id="AC068282">
    <property type="protein sequence ID" value="AAY15044.1"/>
    <property type="molecule type" value="Genomic_DNA"/>
</dbReference>
<dbReference type="EMBL" id="CH471103">
    <property type="protein sequence ID" value="EAW95320.1"/>
    <property type="molecule type" value="Genomic_DNA"/>
</dbReference>
<dbReference type="EMBL" id="BC034377">
    <property type="protein sequence ID" value="AAH34377.1"/>
    <property type="molecule type" value="mRNA"/>
</dbReference>
<dbReference type="EMBL" id="S58668">
    <property type="protein sequence ID" value="AAB26335.1"/>
    <property type="molecule type" value="Genomic_DNA"/>
</dbReference>
<dbReference type="EMBL" id="K02059">
    <property type="protein sequence ID" value="AAA60164.1"/>
    <property type="molecule type" value="mRNA"/>
</dbReference>
<dbReference type="EMBL" id="S76088">
    <property type="status" value="NOT_ANNOTATED_CDS"/>
    <property type="molecule type" value="Genomic_DNA"/>
</dbReference>
<dbReference type="EMBL" id="S76090">
    <property type="status" value="NOT_ANNOTATED_CDS"/>
    <property type="molecule type" value="Genomic_DNA"/>
</dbReference>
<dbReference type="CCDS" id="CCDS2145.1">
    <molecule id="P04070-1"/>
</dbReference>
<dbReference type="PIR" id="A22331">
    <property type="entry name" value="KXHU"/>
</dbReference>
<dbReference type="RefSeq" id="NP_000303.1">
    <molecule id="P04070-1"/>
    <property type="nucleotide sequence ID" value="NM_000312.4"/>
</dbReference>
<dbReference type="RefSeq" id="NP_001362532.1">
    <molecule id="P04070-2"/>
    <property type="nucleotide sequence ID" value="NM_001375603.1"/>
</dbReference>
<dbReference type="RefSeq" id="NP_001362540.1">
    <molecule id="P04070-1"/>
    <property type="nucleotide sequence ID" value="NM_001375611.1"/>
</dbReference>
<dbReference type="RefSeq" id="NP_001362542.1">
    <molecule id="P04070-1"/>
    <property type="nucleotide sequence ID" value="NM_001375613.1"/>
</dbReference>
<dbReference type="PDB" id="1AUT">
    <property type="method" value="X-ray"/>
    <property type="resolution" value="2.80 A"/>
    <property type="chains" value="C=212-461, L=84-197"/>
</dbReference>
<dbReference type="PDB" id="1LQV">
    <property type="method" value="X-ray"/>
    <property type="resolution" value="1.60 A"/>
    <property type="chains" value="C/D=43-75"/>
</dbReference>
<dbReference type="PDB" id="3F6U">
    <property type="method" value="X-ray"/>
    <property type="resolution" value="2.80 A"/>
    <property type="chains" value="H=212-451, L=91-188"/>
</dbReference>
<dbReference type="PDB" id="3JTC">
    <property type="method" value="X-ray"/>
    <property type="resolution" value="1.60 A"/>
    <property type="chains" value="C/D=43-75"/>
</dbReference>
<dbReference type="PDB" id="4DT7">
    <property type="method" value="X-ray"/>
    <property type="resolution" value="1.90 A"/>
    <property type="chains" value="E/F=204-223"/>
</dbReference>
<dbReference type="PDB" id="6M3B">
    <property type="method" value="X-ray"/>
    <property type="resolution" value="2.20 A"/>
    <property type="chains" value="A=212-461, D=43-197"/>
</dbReference>
<dbReference type="PDB" id="6M3C">
    <property type="method" value="X-ray"/>
    <property type="resolution" value="3.70 A"/>
    <property type="chains" value="A/C/G=212-461, B/D/I=43-197"/>
</dbReference>
<dbReference type="PDB" id="8JRU">
    <property type="method" value="EM"/>
    <property type="resolution" value="3.50 A"/>
    <property type="chains" value="R=205-216"/>
</dbReference>
<dbReference type="PDB" id="8JRV">
    <property type="method" value="EM"/>
    <property type="resolution" value="3.30 A"/>
    <property type="chains" value="R=205-216"/>
</dbReference>
<dbReference type="PDB" id="9BVM">
    <property type="method" value="EM"/>
    <property type="resolution" value="3.40 A"/>
    <property type="chains" value="P=19-88"/>
</dbReference>
<dbReference type="PDBsum" id="1AUT"/>
<dbReference type="PDBsum" id="1LQV"/>
<dbReference type="PDBsum" id="3F6U"/>
<dbReference type="PDBsum" id="3JTC"/>
<dbReference type="PDBsum" id="4DT7"/>
<dbReference type="PDBsum" id="6M3B"/>
<dbReference type="PDBsum" id="6M3C"/>
<dbReference type="PDBsum" id="8JRU"/>
<dbReference type="PDBsum" id="8JRV"/>
<dbReference type="PDBsum" id="9BVM"/>
<dbReference type="EMDB" id="EMD-44937"/>
<dbReference type="SASBDB" id="P04070"/>
<dbReference type="SMR" id="P04070"/>
<dbReference type="BioGRID" id="111608">
    <property type="interactions" value="19"/>
</dbReference>
<dbReference type="ComplexPortal" id="CPX-6224">
    <property type="entry name" value="Active Protein C complex"/>
</dbReference>
<dbReference type="ELM" id="P04070"/>
<dbReference type="FunCoup" id="P04070">
    <property type="interactions" value="340"/>
</dbReference>
<dbReference type="IntAct" id="P04070">
    <property type="interactions" value="11"/>
</dbReference>
<dbReference type="MINT" id="P04070"/>
<dbReference type="STRING" id="9606.ENSP00000234071"/>
<dbReference type="BindingDB" id="P04070"/>
<dbReference type="ChEMBL" id="CHEMBL4444"/>
<dbReference type="DrugBank" id="DB13192">
    <property type="generic name" value="Antihemophilic factor human"/>
</dbReference>
<dbReference type="DrugBank" id="DB00025">
    <property type="generic name" value="Antihemophilic factor, human recombinant"/>
</dbReference>
<dbReference type="DrugBank" id="DB09131">
    <property type="generic name" value="Cupric Chloride"/>
</dbReference>
<dbReference type="DrugBank" id="DB09332">
    <property type="generic name" value="Kappadione"/>
</dbReference>
<dbReference type="DrugBank" id="DB13998">
    <property type="generic name" value="Lonoctocog alfa"/>
</dbReference>
<dbReference type="DrugBank" id="DB00170">
    <property type="generic name" value="Menadione"/>
</dbReference>
<dbReference type="DrugBank" id="DB13999">
    <property type="generic name" value="Moroctocog alfa"/>
</dbReference>
<dbReference type="DrugBank" id="DB13149">
    <property type="generic name" value="Protein S human"/>
</dbReference>
<dbReference type="DrugBank" id="DB00464">
    <property type="generic name" value="Sodium tetradecyl sulfate"/>
</dbReference>
<dbReference type="DrugBank" id="DB14738">
    <property type="generic name" value="Turoctocog alfa pegol"/>
</dbReference>
<dbReference type="DrugCentral" id="P04070"/>
<dbReference type="GuidetoPHARMACOLOGY" id="2396"/>
<dbReference type="MEROPS" id="S01.218"/>
<dbReference type="GlyConnect" id="620">
    <property type="glycosylation" value="17 N-Linked glycans (2 sites), 1 O-Linked glycan (1 site)"/>
</dbReference>
<dbReference type="GlyCosmos" id="P04070">
    <property type="glycosylation" value="6 sites, 45 glycans"/>
</dbReference>
<dbReference type="GlyGen" id="P04070">
    <property type="glycosylation" value="7 sites, 53 N-linked glycans (5 sites), 3 O-linked glycans (3 sites)"/>
</dbReference>
<dbReference type="iPTMnet" id="P04070"/>
<dbReference type="PhosphoSitePlus" id="P04070"/>
<dbReference type="BioMuta" id="PROC"/>
<dbReference type="DMDM" id="131067"/>
<dbReference type="MassIVE" id="P04070"/>
<dbReference type="PaxDb" id="9606-ENSP00000234071"/>
<dbReference type="PeptideAtlas" id="P04070"/>
<dbReference type="ProteomicsDB" id="4804"/>
<dbReference type="ProteomicsDB" id="51646">
    <molecule id="P04070-1"/>
</dbReference>
<dbReference type="ABCD" id="P04070">
    <property type="antibodies" value="2 sequenced antibodies"/>
</dbReference>
<dbReference type="Antibodypedia" id="791">
    <property type="antibodies" value="722 antibodies from 41 providers"/>
</dbReference>
<dbReference type="DNASU" id="5624"/>
<dbReference type="Ensembl" id="ENST00000234071.8">
    <molecule id="P04070-1"/>
    <property type="protein sequence ID" value="ENSP00000234071.4"/>
    <property type="gene ID" value="ENSG00000115718.18"/>
</dbReference>
<dbReference type="GeneID" id="5624"/>
<dbReference type="KEGG" id="hsa:5624"/>
<dbReference type="MANE-Select" id="ENST00000234071.8">
    <property type="protein sequence ID" value="ENSP00000234071.4"/>
    <property type="RefSeq nucleotide sequence ID" value="NM_000312.4"/>
    <property type="RefSeq protein sequence ID" value="NP_000303.1"/>
</dbReference>
<dbReference type="UCSC" id="uc002tok.4">
    <molecule id="P04070-1"/>
    <property type="organism name" value="human"/>
</dbReference>
<dbReference type="AGR" id="HGNC:9451"/>
<dbReference type="CTD" id="5624"/>
<dbReference type="DisGeNET" id="5624"/>
<dbReference type="GeneCards" id="PROC"/>
<dbReference type="HGNC" id="HGNC:9451">
    <property type="gene designation" value="PROC"/>
</dbReference>
<dbReference type="HPA" id="ENSG00000115718">
    <property type="expression patterns" value="Tissue enriched (liver)"/>
</dbReference>
<dbReference type="MalaCards" id="PROC"/>
<dbReference type="MIM" id="176860">
    <property type="type" value="phenotype"/>
</dbReference>
<dbReference type="MIM" id="612283">
    <property type="type" value="gene"/>
</dbReference>
<dbReference type="MIM" id="612304">
    <property type="type" value="phenotype"/>
</dbReference>
<dbReference type="neXtProt" id="NX_P04070"/>
<dbReference type="OpenTargets" id="ENSG00000115718"/>
<dbReference type="Orphanet" id="745">
    <property type="disease" value="Severe hereditary thrombophilia due to congenital protein C deficiency"/>
</dbReference>
<dbReference type="PharmGKB" id="PA33799"/>
<dbReference type="VEuPathDB" id="HostDB:ENSG00000115718"/>
<dbReference type="eggNOG" id="ENOG502QQ3W">
    <property type="taxonomic scope" value="Eukaryota"/>
</dbReference>
<dbReference type="GeneTree" id="ENSGT00940000154505"/>
<dbReference type="HOGENOM" id="CLU_006842_19_5_1"/>
<dbReference type="InParanoid" id="P04070"/>
<dbReference type="OrthoDB" id="9028152at2759"/>
<dbReference type="PAN-GO" id="P04070">
    <property type="GO annotations" value="3 GO annotations based on evolutionary models"/>
</dbReference>
<dbReference type="PhylomeDB" id="P04070"/>
<dbReference type="TreeFam" id="TF327329"/>
<dbReference type="BRENDA" id="3.4.21.69">
    <property type="organism ID" value="2681"/>
</dbReference>
<dbReference type="PathwayCommons" id="P04070"/>
<dbReference type="Reactome" id="R-HSA-140837">
    <property type="pathway name" value="Intrinsic Pathway of Fibrin Clot Formation"/>
</dbReference>
<dbReference type="Reactome" id="R-HSA-140875">
    <property type="pathway name" value="Common Pathway of Fibrin Clot Formation"/>
</dbReference>
<dbReference type="Reactome" id="R-HSA-159740">
    <property type="pathway name" value="Gamma-carboxylation of protein precursors"/>
</dbReference>
<dbReference type="Reactome" id="R-HSA-159763">
    <property type="pathway name" value="Transport of gamma-carboxylated protein precursors from the endoplasmic reticulum to the Golgi apparatus"/>
</dbReference>
<dbReference type="Reactome" id="R-HSA-159782">
    <property type="pathway name" value="Removal of aminoterminal propeptides from gamma-carboxylated proteins"/>
</dbReference>
<dbReference type="Reactome" id="R-HSA-202733">
    <property type="pathway name" value="Cell surface interactions at the vascular wall"/>
</dbReference>
<dbReference type="Reactome" id="R-HSA-381426">
    <property type="pathway name" value="Regulation of Insulin-like Growth Factor (IGF) transport and uptake by Insulin-like Growth Factor Binding Proteins (IGFBPs)"/>
</dbReference>
<dbReference type="Reactome" id="R-HSA-8957275">
    <property type="pathway name" value="Post-translational protein phosphorylation"/>
</dbReference>
<dbReference type="SABIO-RK" id="P04070"/>
<dbReference type="SignaLink" id="P04070"/>
<dbReference type="SIGNOR" id="P04070"/>
<dbReference type="BioGRID-ORCS" id="5624">
    <property type="hits" value="6 hits in 1152 CRISPR screens"/>
</dbReference>
<dbReference type="ChiTaRS" id="PROC">
    <property type="organism name" value="human"/>
</dbReference>
<dbReference type="EvolutionaryTrace" id="P04070"/>
<dbReference type="GeneWiki" id="Protein_C"/>
<dbReference type="GenomeRNAi" id="5624"/>
<dbReference type="Pharos" id="P04070">
    <property type="development level" value="Tchem"/>
</dbReference>
<dbReference type="PRO" id="PR:P04070"/>
<dbReference type="Proteomes" id="UP000005640">
    <property type="component" value="Chromosome 2"/>
</dbReference>
<dbReference type="RNAct" id="P04070">
    <property type="molecule type" value="protein"/>
</dbReference>
<dbReference type="Bgee" id="ENSG00000115718">
    <property type="expression patterns" value="Expressed in right lobe of liver and 102 other cell types or tissues"/>
</dbReference>
<dbReference type="ExpressionAtlas" id="P04070">
    <property type="expression patterns" value="baseline and differential"/>
</dbReference>
<dbReference type="GO" id="GO:0005783">
    <property type="term" value="C:endoplasmic reticulum"/>
    <property type="evidence" value="ECO:0000314"/>
    <property type="project" value="UniProtKB"/>
</dbReference>
<dbReference type="GO" id="GO:0005788">
    <property type="term" value="C:endoplasmic reticulum lumen"/>
    <property type="evidence" value="ECO:0000304"/>
    <property type="project" value="Reactome"/>
</dbReference>
<dbReference type="GO" id="GO:0005576">
    <property type="term" value="C:extracellular region"/>
    <property type="evidence" value="ECO:0000304"/>
    <property type="project" value="Reactome"/>
</dbReference>
<dbReference type="GO" id="GO:0005615">
    <property type="term" value="C:extracellular space"/>
    <property type="evidence" value="ECO:0000318"/>
    <property type="project" value="GO_Central"/>
</dbReference>
<dbReference type="GO" id="GO:0005794">
    <property type="term" value="C:Golgi apparatus"/>
    <property type="evidence" value="ECO:0000314"/>
    <property type="project" value="UniProtKB"/>
</dbReference>
<dbReference type="GO" id="GO:0005796">
    <property type="term" value="C:Golgi lumen"/>
    <property type="evidence" value="ECO:0000304"/>
    <property type="project" value="Reactome"/>
</dbReference>
<dbReference type="GO" id="GO:0005509">
    <property type="term" value="F:calcium ion binding"/>
    <property type="evidence" value="ECO:0007669"/>
    <property type="project" value="InterPro"/>
</dbReference>
<dbReference type="GO" id="GO:0004252">
    <property type="term" value="F:serine-type endopeptidase activity"/>
    <property type="evidence" value="ECO:0000315"/>
    <property type="project" value="UniProtKB"/>
</dbReference>
<dbReference type="GO" id="GO:0007596">
    <property type="term" value="P:blood coagulation"/>
    <property type="evidence" value="ECO:0000318"/>
    <property type="project" value="GO_Central"/>
</dbReference>
<dbReference type="GO" id="GO:0043066">
    <property type="term" value="P:negative regulation of apoptotic process"/>
    <property type="evidence" value="ECO:0000315"/>
    <property type="project" value="UniProtKB"/>
</dbReference>
<dbReference type="GO" id="GO:0030195">
    <property type="term" value="P:negative regulation of blood coagulation"/>
    <property type="evidence" value="ECO:0000318"/>
    <property type="project" value="GO_Central"/>
</dbReference>
<dbReference type="GO" id="GO:0050819">
    <property type="term" value="P:negative regulation of coagulation"/>
    <property type="evidence" value="ECO:0000315"/>
    <property type="project" value="UniProtKB"/>
</dbReference>
<dbReference type="GO" id="GO:0050728">
    <property type="term" value="P:negative regulation of inflammatory response"/>
    <property type="evidence" value="ECO:0000315"/>
    <property type="project" value="UniProtKB"/>
</dbReference>
<dbReference type="GO" id="GO:1903142">
    <property type="term" value="P:positive regulation of establishment of endothelial barrier"/>
    <property type="evidence" value="ECO:0000315"/>
    <property type="project" value="UniProtKB"/>
</dbReference>
<dbReference type="GO" id="GO:0006508">
    <property type="term" value="P:proteolysis"/>
    <property type="evidence" value="ECO:0000303"/>
    <property type="project" value="UniProtKB"/>
</dbReference>
<dbReference type="CDD" id="cd00054">
    <property type="entry name" value="EGF_CA"/>
    <property type="match status" value="1"/>
</dbReference>
<dbReference type="CDD" id="cd00190">
    <property type="entry name" value="Tryp_SPc"/>
    <property type="match status" value="1"/>
</dbReference>
<dbReference type="FunFam" id="2.40.10.10:FF:000365">
    <property type="match status" value="1"/>
</dbReference>
<dbReference type="FunFam" id="2.10.25.10:FF:000549">
    <property type="entry name" value="Vitamin K-dependent protein C"/>
    <property type="match status" value="1"/>
</dbReference>
<dbReference type="FunFam" id="2.10.25.10:FF:000567">
    <property type="entry name" value="Vitamin K-dependent protein C"/>
    <property type="match status" value="1"/>
</dbReference>
<dbReference type="FunFam" id="2.40.10.10:FF:000256">
    <property type="entry name" value="Vitamin K-dependent protein C"/>
    <property type="match status" value="1"/>
</dbReference>
<dbReference type="FunFam" id="4.10.740.10:FF:000001">
    <property type="entry name" value="vitamin K-dependent protein S"/>
    <property type="match status" value="1"/>
</dbReference>
<dbReference type="Gene3D" id="4.10.740.10">
    <property type="entry name" value="Coagulation Factor IX"/>
    <property type="match status" value="1"/>
</dbReference>
<dbReference type="Gene3D" id="2.10.25.10">
    <property type="entry name" value="Laminin"/>
    <property type="match status" value="2"/>
</dbReference>
<dbReference type="Gene3D" id="2.40.10.10">
    <property type="entry name" value="Trypsin-like serine proteases"/>
    <property type="match status" value="2"/>
</dbReference>
<dbReference type="InterPro" id="IPR017857">
    <property type="entry name" value="Coagulation_fac-like_Gla_dom"/>
</dbReference>
<dbReference type="InterPro" id="IPR001881">
    <property type="entry name" value="EGF-like_Ca-bd_dom"/>
</dbReference>
<dbReference type="InterPro" id="IPR000742">
    <property type="entry name" value="EGF-like_dom"/>
</dbReference>
<dbReference type="InterPro" id="IPR000152">
    <property type="entry name" value="EGF-type_Asp/Asn_hydroxyl_site"/>
</dbReference>
<dbReference type="InterPro" id="IPR018097">
    <property type="entry name" value="EGF_Ca-bd_CS"/>
</dbReference>
<dbReference type="InterPro" id="IPR035972">
    <property type="entry name" value="GLA-like_dom_SF"/>
</dbReference>
<dbReference type="InterPro" id="IPR000294">
    <property type="entry name" value="GLA_domain"/>
</dbReference>
<dbReference type="InterPro" id="IPR012224">
    <property type="entry name" value="Pept_S1A_FX"/>
</dbReference>
<dbReference type="InterPro" id="IPR050442">
    <property type="entry name" value="Peptidase_S1_coag_factors"/>
</dbReference>
<dbReference type="InterPro" id="IPR009003">
    <property type="entry name" value="Peptidase_S1_PA"/>
</dbReference>
<dbReference type="InterPro" id="IPR043504">
    <property type="entry name" value="Peptidase_S1_PA_chymotrypsin"/>
</dbReference>
<dbReference type="InterPro" id="IPR001314">
    <property type="entry name" value="Peptidase_S1A"/>
</dbReference>
<dbReference type="InterPro" id="IPR001254">
    <property type="entry name" value="Trypsin_dom"/>
</dbReference>
<dbReference type="InterPro" id="IPR018114">
    <property type="entry name" value="TRYPSIN_HIS"/>
</dbReference>
<dbReference type="InterPro" id="IPR033116">
    <property type="entry name" value="TRYPSIN_SER"/>
</dbReference>
<dbReference type="PANTHER" id="PTHR24278">
    <property type="entry name" value="COAGULATION FACTOR"/>
    <property type="match status" value="1"/>
</dbReference>
<dbReference type="PANTHER" id="PTHR24278:SF0">
    <property type="entry name" value="VITAMIN K-DEPENDENT PROTEIN C"/>
    <property type="match status" value="1"/>
</dbReference>
<dbReference type="Pfam" id="PF14670">
    <property type="entry name" value="FXa_inhibition"/>
    <property type="match status" value="1"/>
</dbReference>
<dbReference type="Pfam" id="PF00594">
    <property type="entry name" value="Gla"/>
    <property type="match status" value="1"/>
</dbReference>
<dbReference type="Pfam" id="PF00089">
    <property type="entry name" value="Trypsin"/>
    <property type="match status" value="1"/>
</dbReference>
<dbReference type="PIRSF" id="PIRSF001143">
    <property type="entry name" value="Factor_X"/>
    <property type="match status" value="1"/>
</dbReference>
<dbReference type="PRINTS" id="PR00722">
    <property type="entry name" value="CHYMOTRYPSIN"/>
</dbReference>
<dbReference type="PRINTS" id="PR00001">
    <property type="entry name" value="GLABLOOD"/>
</dbReference>
<dbReference type="SMART" id="SM00181">
    <property type="entry name" value="EGF"/>
    <property type="match status" value="2"/>
</dbReference>
<dbReference type="SMART" id="SM00179">
    <property type="entry name" value="EGF_CA"/>
    <property type="match status" value="1"/>
</dbReference>
<dbReference type="SMART" id="SM00069">
    <property type="entry name" value="GLA"/>
    <property type="match status" value="1"/>
</dbReference>
<dbReference type="SMART" id="SM00020">
    <property type="entry name" value="Tryp_SPc"/>
    <property type="match status" value="1"/>
</dbReference>
<dbReference type="SUPFAM" id="SSF57196">
    <property type="entry name" value="EGF/Laminin"/>
    <property type="match status" value="1"/>
</dbReference>
<dbReference type="SUPFAM" id="SSF57630">
    <property type="entry name" value="GLA-domain"/>
    <property type="match status" value="1"/>
</dbReference>
<dbReference type="SUPFAM" id="SSF50494">
    <property type="entry name" value="Trypsin-like serine proteases"/>
    <property type="match status" value="1"/>
</dbReference>
<dbReference type="PROSITE" id="PS00010">
    <property type="entry name" value="ASX_HYDROXYL"/>
    <property type="match status" value="1"/>
</dbReference>
<dbReference type="PROSITE" id="PS00022">
    <property type="entry name" value="EGF_1"/>
    <property type="match status" value="1"/>
</dbReference>
<dbReference type="PROSITE" id="PS01186">
    <property type="entry name" value="EGF_2"/>
    <property type="match status" value="2"/>
</dbReference>
<dbReference type="PROSITE" id="PS50026">
    <property type="entry name" value="EGF_3"/>
    <property type="match status" value="1"/>
</dbReference>
<dbReference type="PROSITE" id="PS01187">
    <property type="entry name" value="EGF_CA"/>
    <property type="match status" value="1"/>
</dbReference>
<dbReference type="PROSITE" id="PS00011">
    <property type="entry name" value="GLA_1"/>
    <property type="match status" value="1"/>
</dbReference>
<dbReference type="PROSITE" id="PS50998">
    <property type="entry name" value="GLA_2"/>
    <property type="match status" value="1"/>
</dbReference>
<dbReference type="PROSITE" id="PS50240">
    <property type="entry name" value="TRYPSIN_DOM"/>
    <property type="match status" value="1"/>
</dbReference>
<dbReference type="PROSITE" id="PS00134">
    <property type="entry name" value="TRYPSIN_HIS"/>
    <property type="match status" value="1"/>
</dbReference>
<dbReference type="PROSITE" id="PS00135">
    <property type="entry name" value="TRYPSIN_SER"/>
    <property type="match status" value="1"/>
</dbReference>
<sequence length="461" mass="52071">MWQLTSLLLFVATWGISGTPAPLDSVFSSSERAHQVLRIRKRANSFLEELRHSSLERECIEEICDFEEAKEIFQNVDDTLAFWSKHVDGDQCLVLPLEHPCASLCCGHGTCIDGIGSFSCDCRSGWEGRFCQREVSFLNCSLDNGGCTHYCLEEVGWRRCSCAPGYKLGDDLLQCHPAVKFPCGRPWKRMEKKRSHLKRDTEDQEDQVDPRLIDGKMTRRGDSPWQVVLLDSKKKLACGAVLIHPSWVLTAAHCMDESKKLLVRLGEYDLRRWEKWELDLDIKEVFVHPNYSKSTTDNDIALLHLAQPATLSQTIVPICLPDSGLAERELNQAGQETLVTGWGYHSSREKEAKRNRTFVLNFIKIPVVPHNECSEVMSNMVSENMLCAGILGDRQDACEGDSGGPMVASFHGTWFLVGLVSWGEGCGLLHNYGVYTKVSRYLDWIHGHIRDKEAPQKSWAP</sequence>